<keyword id="KW-0002">3D-structure</keyword>
<keyword id="KW-0025">Alternative splicing</keyword>
<keyword id="KW-0036">Amyotrophic lateral sclerosis</keyword>
<keyword id="KW-0131">Cell cycle</keyword>
<keyword id="KW-0132">Cell division</keyword>
<keyword id="KW-0175">Coiled coil</keyword>
<keyword id="KW-0963">Cytoplasm</keyword>
<keyword id="KW-0206">Cytoskeleton</keyword>
<keyword id="KW-0243">Dynein</keyword>
<keyword id="KW-0493">Microtubule</keyword>
<keyword id="KW-0498">Mitosis</keyword>
<keyword id="KW-0523">Neurodegeneration</keyword>
<keyword id="KW-0622">Neuropathy</keyword>
<keyword id="KW-0539">Nucleus</keyword>
<keyword id="KW-0908">Parkinsonism</keyword>
<keyword id="KW-0597">Phosphoprotein</keyword>
<keyword id="KW-1267">Proteomics identification</keyword>
<keyword id="KW-1185">Reference proteome</keyword>
<keyword id="KW-0813">Transport</keyword>
<keyword id="KW-0832">Ubl conjugation</keyword>
<organism>
    <name type="scientific">Homo sapiens</name>
    <name type="common">Human</name>
    <dbReference type="NCBI Taxonomy" id="9606"/>
    <lineage>
        <taxon>Eukaryota</taxon>
        <taxon>Metazoa</taxon>
        <taxon>Chordata</taxon>
        <taxon>Craniata</taxon>
        <taxon>Vertebrata</taxon>
        <taxon>Euteleostomi</taxon>
        <taxon>Mammalia</taxon>
        <taxon>Eutheria</taxon>
        <taxon>Euarchontoglires</taxon>
        <taxon>Primates</taxon>
        <taxon>Haplorrhini</taxon>
        <taxon>Catarrhini</taxon>
        <taxon>Hominidae</taxon>
        <taxon>Homo</taxon>
    </lineage>
</organism>
<accession>Q14203</accession>
<accession>A8MY36</accession>
<accession>B4DM45</accession>
<accession>E9PFS5</accession>
<accession>E9PGE1</accession>
<accession>G5E9H4</accession>
<accession>O95296</accession>
<accession>Q6IQ37</accession>
<accession>Q9BRM9</accession>
<accession>Q9UIU1</accession>
<accession>Q9UIU2</accession>
<proteinExistence type="evidence at protein level"/>
<feature type="chain" id="PRO_0000083518" description="Dynactin subunit 1">
    <location>
        <begin position="1"/>
        <end position="1278"/>
    </location>
</feature>
<feature type="domain" description="CAP-Gly" evidence="4">
    <location>
        <begin position="48"/>
        <end position="90"/>
    </location>
</feature>
<feature type="region of interest" description="Disordered" evidence="5">
    <location>
        <begin position="1"/>
        <end position="25"/>
    </location>
</feature>
<feature type="region of interest" description="Disordered" evidence="5">
    <location>
        <begin position="100"/>
        <end position="223"/>
    </location>
</feature>
<feature type="region of interest" description="Interaction with HPS6" evidence="40">
    <location>
        <begin position="911"/>
        <end position="1278"/>
    </location>
</feature>
<feature type="coiled-coil region" evidence="3">
    <location>
        <begin position="213"/>
        <end position="547"/>
    </location>
</feature>
<feature type="coiled-coil region" evidence="3">
    <location>
        <begin position="943"/>
        <end position="1049"/>
    </location>
</feature>
<feature type="coiled-coil region" evidence="3">
    <location>
        <begin position="1182"/>
        <end position="1211"/>
    </location>
</feature>
<feature type="compositionally biased region" description="Polar residues" evidence="5">
    <location>
        <begin position="102"/>
        <end position="114"/>
    </location>
</feature>
<feature type="compositionally biased region" description="Basic residues" evidence="5">
    <location>
        <begin position="129"/>
        <end position="152"/>
    </location>
</feature>
<feature type="compositionally biased region" description="Low complexity" evidence="5">
    <location>
        <begin position="161"/>
        <end position="184"/>
    </location>
</feature>
<feature type="compositionally biased region" description="Basic and acidic residues" evidence="5">
    <location>
        <begin position="214"/>
        <end position="223"/>
    </location>
</feature>
<feature type="modified residue" description="Phosphothreonine" evidence="51">
    <location>
        <position position="108"/>
    </location>
</feature>
<feature type="modified residue" description="Phosphothreonine; by SLK" evidence="34">
    <location>
        <position position="145"/>
    </location>
</feature>
<feature type="modified residue" description="Phosphothreonine; by SLK" evidence="34">
    <location>
        <position position="146"/>
    </location>
</feature>
<feature type="modified residue" description="Phosphothreonine; by SLK" evidence="34">
    <location>
        <position position="147"/>
    </location>
</feature>
<feature type="modified residue" description="Phosphoserine; by PLK1" evidence="22">
    <location>
        <position position="179"/>
    </location>
</feature>
<feature type="modified residue" description="Phosphoserine; by CDK1" evidence="22">
    <location>
        <position position="212"/>
    </location>
</feature>
<feature type="splice variant" id="VSP_000760" description="In isoform p135 and isoform 5." evidence="47">
    <original>MAQSKRHVYSRTPSGSRMSAEASARPLRVGSRVEVIGKGHRGTVAYVGATLFATGKWVGVILDEAKGKNDGTVQGRKYFTCDEGHGIFVRQSQIQVFEDGADTTSPETPDSSASKVLKREGTDTTAKTSKLRGLKPKK</original>
    <variation>MMRQ</variation>
    <location>
        <begin position="1"/>
        <end position="138"/>
    </location>
</feature>
<feature type="splice variant" id="VSP_045392" description="In isoform 3." evidence="46">
    <location>
        <begin position="1"/>
        <end position="17"/>
    </location>
</feature>
<feature type="splice variant" id="VSP_045393" description="In isoform 3 and isoform 4." evidence="46">
    <location>
        <begin position="132"/>
        <end position="151"/>
    </location>
</feature>
<feature type="splice variant" id="VSP_047174" description="In isoform 6." evidence="48">
    <location>
        <begin position="132"/>
        <end position="138"/>
    </location>
</feature>
<feature type="splice variant" id="VSP_045394" description="In isoform 3, isoform 4 and isoform 5." evidence="46 47">
    <location>
        <begin position="1066"/>
        <end position="1070"/>
    </location>
</feature>
<feature type="sequence variant" id="VAR_071452" description="In PERRYS; mutation carriers either do not develop depression or they do develop it late in the disease course; dbSNP:rs886039227." evidence="36">
    <original>F</original>
    <variation>L</variation>
    <location>
        <position position="52"/>
    </location>
</feature>
<feature type="sequence variant" id="VAR_015850" description="In HMND14; reduced affinity for microtubules which has been suggested to impair axonal transport; the effect is identical to that of complete loss of the CAP-Gly domain; decreased interaction with MAPRE1; no effect on its interaction with TBCB; dbSNP:rs121909342." evidence="6 12 18 19 29">
    <original>G</original>
    <variation>S</variation>
    <location>
        <position position="59"/>
    </location>
</feature>
<feature type="sequence variant" id="VAR_063867" description="In PERRYS; dbSNP:rs67586389." evidence="18">
    <original>G</original>
    <variation>A</variation>
    <location>
        <position position="71"/>
    </location>
</feature>
<feature type="sequence variant" id="VAR_063868" description="In PERRYS; dbSNP:rs67586389." evidence="18">
    <original>G</original>
    <variation>E</variation>
    <location>
        <position position="71"/>
    </location>
</feature>
<feature type="sequence variant" id="VAR_063869" description="In PERRYS; reduced microtubule binding; results in the accumulation of intracytoplasmic inclusions; loss of interaction with CLIP1; significant decrease in motility of dynein-dynactin complex along microtubules; dbSNP:rs72466485." evidence="18 38 39 43">
    <original>G</original>
    <variation>R</variation>
    <location>
        <position position="71"/>
    </location>
</feature>
<feature type="sequence variant" id="VAR_063870" description="In PERRYS; dbSNP:rs72466486." evidence="18">
    <original>T</original>
    <variation>P</variation>
    <location>
        <position position="72"/>
    </location>
</feature>
<feature type="sequence variant" id="VAR_063871" description="In PERRYS; diminishes microtubule binding and lead to intracytoplasmic inclusions; significant decrease in motility of dynein-dynactin complex along microtubules; defective in inhibiting microtubule catastrophe in neurons; dbSNP:rs72466487." evidence="18 33 39">
    <original>Q</original>
    <variation>P</variation>
    <location>
        <position position="74"/>
    </location>
</feature>
<feature type="sequence variant" id="VAR_071453" description="In PERRYS; significantly reduced microtubule binding; dbSNP:rs886039229." evidence="38">
    <original>Y</original>
    <variation>C</variation>
    <location>
        <position position="78"/>
    </location>
</feature>
<feature type="sequence variant" id="VAR_001373">
    <original>A</original>
    <variation>P</variation>
    <location>
        <position position="163"/>
    </location>
</feature>
<feature type="sequence variant" id="VAR_076920" description="No effect of its interaction with TBCB; no loss of localization to microtubules; dbSNP:rs55862001." evidence="15 29">
    <original>I</original>
    <variation>V</variation>
    <location>
        <position position="196"/>
    </location>
</feature>
<feature type="sequence variant" id="VAR_048677" description="In dbSNP:rs13420401.">
    <original>L</original>
    <variation>M</variation>
    <location>
        <position position="287"/>
    </location>
</feature>
<feature type="sequence variant" id="VAR_048678" description="In dbSNP:rs17721059." evidence="15">
    <original>R</original>
    <variation>Q</variation>
    <location>
        <position position="495"/>
    </location>
</feature>
<feature type="sequence variant" id="VAR_063872" description="In ALS; associated with disease susceptibility; dbSNP:rs121909343." evidence="9">
    <original>M</original>
    <variation>T</variation>
    <location>
        <position position="571"/>
    </location>
</feature>
<feature type="sequence variant" id="VAR_073287" description="Found in a patient with hereditary motor and sensory neuropathy; uncertain significance; dbSNP:rs765819985." evidence="35">
    <original>Y</original>
    <variation>F</variation>
    <location>
        <position position="670"/>
    </location>
</feature>
<feature type="sequence variant" id="VAR_063873" description="In ALS; associated with disease susceptibility; dbSNP:rs121909344." evidence="9">
    <original>R</original>
    <variation>W</variation>
    <location>
        <position position="785"/>
    </location>
</feature>
<feature type="sequence variant" id="VAR_063874" description="In ALS; associated with disease susceptibility; dbSNP:rs121909345." evidence="11">
    <original>R</original>
    <variation>K</variation>
    <location>
        <position position="1101"/>
    </location>
</feature>
<feature type="sequence variant" id="VAR_063875" description="In ALS; uncertain significance; dbSNP:rs72466496." evidence="9 15 20">
    <original>T</original>
    <variation>I</variation>
    <location>
        <position position="1249"/>
    </location>
</feature>
<feature type="mutagenesis site" description="Abolishes interaction with CLIP1." evidence="16">
    <original>K</original>
    <variation>A</variation>
    <location>
        <position position="68"/>
    </location>
</feature>
<feature type="mutagenesis site" description="Abolishes interaction with CLIP1." evidence="16">
    <original>R</original>
    <variation>E</variation>
    <location>
        <position position="90"/>
    </location>
</feature>
<feature type="mutagenesis site" description="Affects centrosomal localization; when associated with A-146 and A-147." evidence="34">
    <original>T</original>
    <variation>A</variation>
    <location>
        <position position="145"/>
    </location>
</feature>
<feature type="mutagenesis site" description="Affects centrosomal localization; when associated with A-145 and A-147." evidence="34">
    <original>T</original>
    <variation>A</variation>
    <location>
        <position position="146"/>
    </location>
</feature>
<feature type="mutagenesis site" description="Affects centrosomal localization; when associated with A-145 and A-146." evidence="34">
    <original>T</original>
    <variation>A</variation>
    <location>
        <position position="147"/>
    </location>
</feature>
<feature type="mutagenesis site" description="Non-phosphorylatable by PLK1. Decreased nuclear envelope localization. No loss of microtubule-binding. No effect on its interaction with CLIP1." evidence="22">
    <original>S</original>
    <variation>A</variation>
    <location>
        <position position="179"/>
    </location>
</feature>
<feature type="mutagenesis site" description="No loss of localization to nuclear envelope. Decrease in microtubule-binding. No effect on its interaction with CLIP1." evidence="22">
    <original>S</original>
    <variation>D</variation>
    <location>
        <position position="179"/>
    </location>
</feature>
<feature type="mutagenesis site" description="No effect on its interaction with CLIP1 and PLK1." evidence="22">
    <original>S</original>
    <variation>A</variation>
    <location>
        <position position="212"/>
    </location>
</feature>
<feature type="sequence conflict" description="In Ref. 7; CAA67333." evidence="49" ref="7">
    <original>S</original>
    <variation>N</variation>
    <location>
        <position position="10"/>
    </location>
</feature>
<feature type="sequence conflict" description="In Ref. 2; BAG59757." evidence="49" ref="2">
    <original>Q</original>
    <variation>R</variation>
    <location>
        <position position="257"/>
    </location>
</feature>
<feature type="sequence conflict" description="In Ref. 2; AK314352." evidence="49" ref="2">
    <original>K</original>
    <variation>R</variation>
    <location>
        <position position="349"/>
    </location>
</feature>
<feature type="sequence conflict" description="In Ref. 2; AK314352." evidence="49" ref="2">
    <original>A</original>
    <variation>V</variation>
    <location>
        <position position="368"/>
    </location>
</feature>
<feature type="sequence conflict" description="In Ref. 5; AAH71583." evidence="49" ref="5">
    <original>H</original>
    <variation>N</variation>
    <location>
        <position position="526"/>
    </location>
</feature>
<feature type="sequence conflict" description="In Ref. 5; AAH71583." evidence="49" ref="5">
    <original>K</original>
    <variation>R</variation>
    <location>
        <position position="618"/>
    </location>
</feature>
<feature type="sequence conflict" description="In Ref. 7; CAA67333." evidence="49" ref="7">
    <original>D</original>
    <variation>V</variation>
    <location>
        <position position="712"/>
    </location>
</feature>
<feature type="sequence conflict" description="In Ref. 9; AAP35404." evidence="49" ref="9">
    <original>V</original>
    <variation>M</variation>
    <location>
        <position position="1081"/>
    </location>
</feature>
<feature type="sequence conflict" description="In Ref. 2; BAG59757." evidence="49" ref="2">
    <original>R</original>
    <variation>Q</variation>
    <location>
        <position position="1261"/>
    </location>
</feature>
<feature type="sequence conflict" description="In Ref. 5; AAH71583." evidence="49" ref="5">
    <original>S</original>
    <variation>I</variation>
    <location>
        <position position="1274"/>
    </location>
</feature>
<feature type="strand" evidence="53">
    <location>
        <begin position="17"/>
        <end position="19"/>
    </location>
</feature>
<feature type="strand" evidence="52">
    <location>
        <begin position="32"/>
        <end position="35"/>
    </location>
</feature>
<feature type="turn" evidence="52">
    <location>
        <begin position="36"/>
        <end position="38"/>
    </location>
</feature>
<feature type="strand" evidence="52">
    <location>
        <begin position="41"/>
        <end position="48"/>
    </location>
</feature>
<feature type="strand" evidence="52">
    <location>
        <begin position="51"/>
        <end position="55"/>
    </location>
</feature>
<feature type="strand" evidence="52">
    <location>
        <begin position="57"/>
        <end position="65"/>
    </location>
</feature>
<feature type="strand" evidence="52">
    <location>
        <begin position="67"/>
        <end position="73"/>
    </location>
</feature>
<feature type="strand" evidence="52">
    <location>
        <begin position="76"/>
        <end position="78"/>
    </location>
</feature>
<feature type="turn" evidence="54">
    <location>
        <begin position="83"/>
        <end position="85"/>
    </location>
</feature>
<feature type="strand" evidence="52">
    <location>
        <begin position="86"/>
        <end position="89"/>
    </location>
</feature>
<feature type="helix" evidence="52">
    <location>
        <begin position="91"/>
        <end position="93"/>
    </location>
</feature>
<feature type="strand" evidence="52">
    <location>
        <begin position="94"/>
        <end position="96"/>
    </location>
</feature>
<reference key="1">
    <citation type="journal article" date="1998" name="Genomics">
        <title>Human DCTN1: genomic structure and evaluation as a candidate for Alstrom syndrome.</title>
        <authorList>
            <person name="Collin G.B."/>
            <person name="Nishina P.M."/>
            <person name="Marshall J.D."/>
            <person name="Naggert J.K."/>
        </authorList>
    </citation>
    <scope>NUCLEOTIDE SEQUENCE [GENOMIC DNA]</scope>
    <scope>ALTERNATIVE SPLICING</scope>
</reference>
<reference key="2">
    <citation type="journal article" date="2004" name="Nat. Genet.">
        <title>Complete sequencing and characterization of 21,243 full-length human cDNAs.</title>
        <authorList>
            <person name="Ota T."/>
            <person name="Suzuki Y."/>
            <person name="Nishikawa T."/>
            <person name="Otsuki T."/>
            <person name="Sugiyama T."/>
            <person name="Irie R."/>
            <person name="Wakamatsu A."/>
            <person name="Hayashi K."/>
            <person name="Sato H."/>
            <person name="Nagai K."/>
            <person name="Kimura K."/>
            <person name="Makita H."/>
            <person name="Sekine M."/>
            <person name="Obayashi M."/>
            <person name="Nishi T."/>
            <person name="Shibahara T."/>
            <person name="Tanaka T."/>
            <person name="Ishii S."/>
            <person name="Yamamoto J."/>
            <person name="Saito K."/>
            <person name="Kawai Y."/>
            <person name="Isono Y."/>
            <person name="Nakamura Y."/>
            <person name="Nagahari K."/>
            <person name="Murakami K."/>
            <person name="Yasuda T."/>
            <person name="Iwayanagi T."/>
            <person name="Wagatsuma M."/>
            <person name="Shiratori A."/>
            <person name="Sudo H."/>
            <person name="Hosoiri T."/>
            <person name="Kaku Y."/>
            <person name="Kodaira H."/>
            <person name="Kondo H."/>
            <person name="Sugawara M."/>
            <person name="Takahashi M."/>
            <person name="Kanda K."/>
            <person name="Yokoi T."/>
            <person name="Furuya T."/>
            <person name="Kikkawa E."/>
            <person name="Omura Y."/>
            <person name="Abe K."/>
            <person name="Kamihara K."/>
            <person name="Katsuta N."/>
            <person name="Sato K."/>
            <person name="Tanikawa M."/>
            <person name="Yamazaki M."/>
            <person name="Ninomiya K."/>
            <person name="Ishibashi T."/>
            <person name="Yamashita H."/>
            <person name="Murakawa K."/>
            <person name="Fujimori K."/>
            <person name="Tanai H."/>
            <person name="Kimata M."/>
            <person name="Watanabe M."/>
            <person name="Hiraoka S."/>
            <person name="Chiba Y."/>
            <person name="Ishida S."/>
            <person name="Ono Y."/>
            <person name="Takiguchi S."/>
            <person name="Watanabe S."/>
            <person name="Yosida M."/>
            <person name="Hotuta T."/>
            <person name="Kusano J."/>
            <person name="Kanehori K."/>
            <person name="Takahashi-Fujii A."/>
            <person name="Hara H."/>
            <person name="Tanase T.-O."/>
            <person name="Nomura Y."/>
            <person name="Togiya S."/>
            <person name="Komai F."/>
            <person name="Hara R."/>
            <person name="Takeuchi K."/>
            <person name="Arita M."/>
            <person name="Imose N."/>
            <person name="Musashino K."/>
            <person name="Yuuki H."/>
            <person name="Oshima A."/>
            <person name="Sasaki N."/>
            <person name="Aotsuka S."/>
            <person name="Yoshikawa Y."/>
            <person name="Matsunawa H."/>
            <person name="Ichihara T."/>
            <person name="Shiohata N."/>
            <person name="Sano S."/>
            <person name="Moriya S."/>
            <person name="Momiyama H."/>
            <person name="Satoh N."/>
            <person name="Takami S."/>
            <person name="Terashima Y."/>
            <person name="Suzuki O."/>
            <person name="Nakagawa S."/>
            <person name="Senoh A."/>
            <person name="Mizoguchi H."/>
            <person name="Goto Y."/>
            <person name="Shimizu F."/>
            <person name="Wakebe H."/>
            <person name="Hishigaki H."/>
            <person name="Watanabe T."/>
            <person name="Sugiyama A."/>
            <person name="Takemoto M."/>
            <person name="Kawakami B."/>
            <person name="Yamazaki M."/>
            <person name="Watanabe K."/>
            <person name="Kumagai A."/>
            <person name="Itakura S."/>
            <person name="Fukuzumi Y."/>
            <person name="Fujimori Y."/>
            <person name="Komiyama M."/>
            <person name="Tashiro H."/>
            <person name="Tanigami A."/>
            <person name="Fujiwara T."/>
            <person name="Ono T."/>
            <person name="Yamada K."/>
            <person name="Fujii Y."/>
            <person name="Ozaki K."/>
            <person name="Hirao M."/>
            <person name="Ohmori Y."/>
            <person name="Kawabata A."/>
            <person name="Hikiji T."/>
            <person name="Kobatake N."/>
            <person name="Inagaki H."/>
            <person name="Ikema Y."/>
            <person name="Okamoto S."/>
            <person name="Okitani R."/>
            <person name="Kawakami T."/>
            <person name="Noguchi S."/>
            <person name="Itoh T."/>
            <person name="Shigeta K."/>
            <person name="Senba T."/>
            <person name="Matsumura K."/>
            <person name="Nakajima Y."/>
            <person name="Mizuno T."/>
            <person name="Morinaga M."/>
            <person name="Sasaki M."/>
            <person name="Togashi T."/>
            <person name="Oyama M."/>
            <person name="Hata H."/>
            <person name="Watanabe M."/>
            <person name="Komatsu T."/>
            <person name="Mizushima-Sugano J."/>
            <person name="Satoh T."/>
            <person name="Shirai Y."/>
            <person name="Takahashi Y."/>
            <person name="Nakagawa K."/>
            <person name="Okumura K."/>
            <person name="Nagase T."/>
            <person name="Nomura N."/>
            <person name="Kikuchi H."/>
            <person name="Masuho Y."/>
            <person name="Yamashita R."/>
            <person name="Nakai K."/>
            <person name="Yada T."/>
            <person name="Nakamura Y."/>
            <person name="Ohara O."/>
            <person name="Isogai T."/>
            <person name="Sugano S."/>
        </authorList>
    </citation>
    <scope>NUCLEOTIDE SEQUENCE [LARGE SCALE MRNA] (ISOFORMS 3 AND 4)</scope>
    <source>
        <tissue>Brain</tissue>
        <tissue>Trachea</tissue>
    </source>
</reference>
<reference key="3">
    <citation type="journal article" date="2005" name="Nature">
        <title>Generation and annotation of the DNA sequences of human chromosomes 2 and 4.</title>
        <authorList>
            <person name="Hillier L.W."/>
            <person name="Graves T.A."/>
            <person name="Fulton R.S."/>
            <person name="Fulton L.A."/>
            <person name="Pepin K.H."/>
            <person name="Minx P."/>
            <person name="Wagner-McPherson C."/>
            <person name="Layman D."/>
            <person name="Wylie K."/>
            <person name="Sekhon M."/>
            <person name="Becker M.C."/>
            <person name="Fewell G.A."/>
            <person name="Delehaunty K.D."/>
            <person name="Miner T.L."/>
            <person name="Nash W.E."/>
            <person name="Kremitzki C."/>
            <person name="Oddy L."/>
            <person name="Du H."/>
            <person name="Sun H."/>
            <person name="Bradshaw-Cordum H."/>
            <person name="Ali J."/>
            <person name="Carter J."/>
            <person name="Cordes M."/>
            <person name="Harris A."/>
            <person name="Isak A."/>
            <person name="van Brunt A."/>
            <person name="Nguyen C."/>
            <person name="Du F."/>
            <person name="Courtney L."/>
            <person name="Kalicki J."/>
            <person name="Ozersky P."/>
            <person name="Abbott S."/>
            <person name="Armstrong J."/>
            <person name="Belter E.A."/>
            <person name="Caruso L."/>
            <person name="Cedroni M."/>
            <person name="Cotton M."/>
            <person name="Davidson T."/>
            <person name="Desai A."/>
            <person name="Elliott G."/>
            <person name="Erb T."/>
            <person name="Fronick C."/>
            <person name="Gaige T."/>
            <person name="Haakenson W."/>
            <person name="Haglund K."/>
            <person name="Holmes A."/>
            <person name="Harkins R."/>
            <person name="Kim K."/>
            <person name="Kruchowski S.S."/>
            <person name="Strong C.M."/>
            <person name="Grewal N."/>
            <person name="Goyea E."/>
            <person name="Hou S."/>
            <person name="Levy A."/>
            <person name="Martinka S."/>
            <person name="Mead K."/>
            <person name="McLellan M.D."/>
            <person name="Meyer R."/>
            <person name="Randall-Maher J."/>
            <person name="Tomlinson C."/>
            <person name="Dauphin-Kohlberg S."/>
            <person name="Kozlowicz-Reilly A."/>
            <person name="Shah N."/>
            <person name="Swearengen-Shahid S."/>
            <person name="Snider J."/>
            <person name="Strong J.T."/>
            <person name="Thompson J."/>
            <person name="Yoakum M."/>
            <person name="Leonard S."/>
            <person name="Pearman C."/>
            <person name="Trani L."/>
            <person name="Radionenko M."/>
            <person name="Waligorski J.E."/>
            <person name="Wang C."/>
            <person name="Rock S.M."/>
            <person name="Tin-Wollam A.-M."/>
            <person name="Maupin R."/>
            <person name="Latreille P."/>
            <person name="Wendl M.C."/>
            <person name="Yang S.-P."/>
            <person name="Pohl C."/>
            <person name="Wallis J.W."/>
            <person name="Spieth J."/>
            <person name="Bieri T.A."/>
            <person name="Berkowicz N."/>
            <person name="Nelson J.O."/>
            <person name="Osborne J."/>
            <person name="Ding L."/>
            <person name="Meyer R."/>
            <person name="Sabo A."/>
            <person name="Shotland Y."/>
            <person name="Sinha P."/>
            <person name="Wohldmann P.E."/>
            <person name="Cook L.L."/>
            <person name="Hickenbotham M.T."/>
            <person name="Eldred J."/>
            <person name="Williams D."/>
            <person name="Jones T.A."/>
            <person name="She X."/>
            <person name="Ciccarelli F.D."/>
            <person name="Izaurralde E."/>
            <person name="Taylor J."/>
            <person name="Schmutz J."/>
            <person name="Myers R.M."/>
            <person name="Cox D.R."/>
            <person name="Huang X."/>
            <person name="McPherson J.D."/>
            <person name="Mardis E.R."/>
            <person name="Clifton S.W."/>
            <person name="Warren W.C."/>
            <person name="Chinwalla A.T."/>
            <person name="Eddy S.R."/>
            <person name="Marra M.A."/>
            <person name="Ovcharenko I."/>
            <person name="Furey T.S."/>
            <person name="Miller W."/>
            <person name="Eichler E.E."/>
            <person name="Bork P."/>
            <person name="Suyama M."/>
            <person name="Torrents D."/>
            <person name="Waterston R.H."/>
            <person name="Wilson R.K."/>
        </authorList>
    </citation>
    <scope>NUCLEOTIDE SEQUENCE [LARGE SCALE GENOMIC DNA]</scope>
</reference>
<reference key="4">
    <citation type="submission" date="2005-07" db="EMBL/GenBank/DDBJ databases">
        <authorList>
            <person name="Mural R.J."/>
            <person name="Istrail S."/>
            <person name="Sutton G.G."/>
            <person name="Florea L."/>
            <person name="Halpern A.L."/>
            <person name="Mobarry C.M."/>
            <person name="Lippert R."/>
            <person name="Walenz B."/>
            <person name="Shatkay H."/>
            <person name="Dew I."/>
            <person name="Miller J.R."/>
            <person name="Flanigan M.J."/>
            <person name="Edwards N.J."/>
            <person name="Bolanos R."/>
            <person name="Fasulo D."/>
            <person name="Halldorsson B.V."/>
            <person name="Hannenhalli S."/>
            <person name="Turner R."/>
            <person name="Yooseph S."/>
            <person name="Lu F."/>
            <person name="Nusskern D.R."/>
            <person name="Shue B.C."/>
            <person name="Zheng X.H."/>
            <person name="Zhong F."/>
            <person name="Delcher A.L."/>
            <person name="Huson D.H."/>
            <person name="Kravitz S.A."/>
            <person name="Mouchard L."/>
            <person name="Reinert K."/>
            <person name="Remington K.A."/>
            <person name="Clark A.G."/>
            <person name="Waterman M.S."/>
            <person name="Eichler E.E."/>
            <person name="Adams M.D."/>
            <person name="Hunkapiller M.W."/>
            <person name="Myers E.W."/>
            <person name="Venter J.C."/>
        </authorList>
    </citation>
    <scope>NUCLEOTIDE SEQUENCE [LARGE SCALE GENOMIC DNA]</scope>
</reference>
<reference key="5">
    <citation type="journal article" date="2004" name="Genome Res.">
        <title>The status, quality, and expansion of the NIH full-length cDNA project: the Mammalian Gene Collection (MGC).</title>
        <authorList>
            <consortium name="The MGC Project Team"/>
        </authorList>
    </citation>
    <scope>NUCLEOTIDE SEQUENCE [LARGE SCALE MRNA] (ISOFORM 5)</scope>
    <source>
        <tissue>Brain</tissue>
    </source>
</reference>
<reference key="6">
    <citation type="journal article" date="1996" name="Genomics">
        <title>Localization of the DCTN1 gene encoding p150Glued to human chromosome 2p13 by fluorescence in situ hybridization.</title>
        <authorList>
            <person name="Holzbaur E.L.F."/>
            <person name="Tokito M.K."/>
        </authorList>
    </citation>
    <scope>NUCLEOTIDE SEQUENCE [GENOMIC DNA] OF 9-1278</scope>
    <source>
        <tissue>Brain</tissue>
    </source>
</reference>
<reference key="7">
    <citation type="journal article" date="1996" name="Mol. Biol. Cell">
        <title>Functionally distinct isoforms of dynactin are expressed in human neurons.</title>
        <authorList>
            <person name="Tokito M.K."/>
            <person name="Howland D.S."/>
            <person name="Lee V.M.-Y."/>
            <person name="Holzbaur E.L.F."/>
        </authorList>
    </citation>
    <scope>NUCLEOTIDE SEQUENCE [MRNA] OF 9-1278 (ISOFORM 6)</scope>
    <scope>ALTERNATIVE SPLICING</scope>
    <source>
        <tissue>Brain</tissue>
    </source>
</reference>
<reference key="8">
    <citation type="journal article" date="1998" name="Biochim. Biophys. Acta">
        <title>The genomic structure of DCTN1, a candidate gene for limb-girdle muscular dystrophy.</title>
        <authorList>
            <person name="Tokito M.K."/>
            <person name="Holzbaur E.L.F."/>
        </authorList>
    </citation>
    <scope>NUCLEOTIDE SEQUENCE [GENOMIC DNA] OF 18-1278</scope>
</reference>
<reference key="9">
    <citation type="submission" date="2003-05" db="EMBL/GenBank/DDBJ databases">
        <title>Cloning of human full-length CDSs in BD Creator(TM) system donor vector.</title>
        <authorList>
            <person name="Kalnine N."/>
            <person name="Chen X."/>
            <person name="Rolfs A."/>
            <person name="Halleck A."/>
            <person name="Hines L."/>
            <person name="Eisenstein S."/>
            <person name="Koundinya M."/>
            <person name="Raphael J."/>
            <person name="Moreira D."/>
            <person name="Kelley T."/>
            <person name="LaBaer J."/>
            <person name="Lin Y."/>
            <person name="Phelan M."/>
            <person name="Farmer A."/>
        </authorList>
    </citation>
    <scope>NUCLEOTIDE SEQUENCE [LARGE SCALE MRNA] OF 1081-1278</scope>
</reference>
<reference key="10">
    <citation type="journal article" date="2003" name="J. Biol. Chem.">
        <title>Characterization of functional domains of human EB1 family proteins.</title>
        <authorList>
            <person name="Bu W."/>
            <person name="Su L.-K."/>
        </authorList>
    </citation>
    <scope>INTERACTION WITH MAPRE1; MAPRE2 AND MAPRE3</scope>
</reference>
<reference key="11">
    <citation type="journal article" date="2003" name="Nature">
        <title>Proteomic characterization of the human centrosome by protein correlation profiling.</title>
        <authorList>
            <person name="Andersen J.S."/>
            <person name="Wilkinson C.J."/>
            <person name="Mayor T."/>
            <person name="Mortensen P."/>
            <person name="Nigg E.A."/>
            <person name="Mann M."/>
        </authorList>
    </citation>
    <scope>IDENTIFICATION BY MASS SPECTROMETRY</scope>
    <scope>SUBCELLULAR LOCATION [LARGE SCALE ANALYSIS]</scope>
    <source>
        <tissue>Lymphoblast</tissue>
    </source>
</reference>
<reference key="12">
    <citation type="journal article" date="2006" name="Nat. Biotechnol.">
        <title>A probability-based approach for high-throughput protein phosphorylation analysis and site localization.</title>
        <authorList>
            <person name="Beausoleil S.A."/>
            <person name="Villen J."/>
            <person name="Gerber S.A."/>
            <person name="Rush J."/>
            <person name="Gygi S.P."/>
        </authorList>
    </citation>
    <scope>IDENTIFICATION BY MASS SPECTROMETRY [LARGE SCALE ANALYSIS]</scope>
    <source>
        <tissue>Cervix carcinoma</tissue>
    </source>
</reference>
<reference key="13">
    <citation type="journal article" date="2007" name="Biochem. Biophys. Res. Commun.">
        <title>FBXL5 interacts with p150Glued and regulates its ubiquitination.</title>
        <authorList>
            <person name="Zhang N."/>
            <person name="Liu J."/>
            <person name="Ding X."/>
            <person name="Aikhionbare F."/>
            <person name="Jin C."/>
            <person name="Yao X."/>
        </authorList>
    </citation>
    <scope>UBIQUITINATION</scope>
    <scope>INTERACTION WITH FBXL5</scope>
</reference>
<reference key="14">
    <citation type="journal article" date="2008" name="Proc. Natl. Acad. Sci. U.S.A.">
        <title>A quantitative atlas of mitotic phosphorylation.</title>
        <authorList>
            <person name="Dephoure N."/>
            <person name="Zhou C."/>
            <person name="Villen J."/>
            <person name="Beausoleil S.A."/>
            <person name="Bakalarski C.E."/>
            <person name="Elledge S.J."/>
            <person name="Gygi S.P."/>
        </authorList>
    </citation>
    <scope>IDENTIFICATION BY MASS SPECTROMETRY [LARGE SCALE ANALYSIS]</scope>
    <source>
        <tissue>Cervix carcinoma</tissue>
    </source>
</reference>
<reference key="15">
    <citation type="journal article" date="2009" name="Cell Res.">
        <title>The retromer component SNX6 interacts with dynactin p150(Glued) and mediates endosome-to-TGN transport.</title>
        <authorList>
            <person name="Hong Z."/>
            <person name="Yang Y."/>
            <person name="Zhang C."/>
            <person name="Niu Y."/>
            <person name="Li K."/>
            <person name="Zhao X."/>
            <person name="Liu J.J."/>
        </authorList>
    </citation>
    <scope>INTERACTION WITH SNX6</scope>
</reference>
<reference key="16">
    <citation type="journal article" date="2009" name="Sci. Signal.">
        <title>Quantitative phosphoproteomic analysis of T cell receptor signaling reveals system-wide modulation of protein-protein interactions.</title>
        <authorList>
            <person name="Mayya V."/>
            <person name="Lundgren D.H."/>
            <person name="Hwang S.-I."/>
            <person name="Rezaul K."/>
            <person name="Wu L."/>
            <person name="Eng J.K."/>
            <person name="Rodionov V."/>
            <person name="Han D.K."/>
        </authorList>
    </citation>
    <scope>PHOSPHORYLATION [LARGE SCALE ANALYSIS] AT THR-108</scope>
    <scope>IDENTIFICATION BY MASS SPECTROMETRY [LARGE SCALE ANALYSIS]</scope>
    <source>
        <tissue>Leukemic T-cell</tissue>
    </source>
</reference>
<reference key="17">
    <citation type="journal article" date="2010" name="J. Biol. Chem.">
        <title>A protein interaction network for Ecm29 links the 26 S proteasome to molecular motors and endosomal components.</title>
        <authorList>
            <person name="Gorbea C."/>
            <person name="Pratt G."/>
            <person name="Ustrell V."/>
            <person name="Bell R."/>
            <person name="Sahasrabudhe S."/>
            <person name="Hughes R.E."/>
            <person name="Rechsteiner M."/>
        </authorList>
    </citation>
    <scope>INTERACTION WITH ECPAS</scope>
</reference>
<reference key="18">
    <citation type="journal article" date="2010" name="Mol. Biol. Cell">
        <title>Par6 alpha interacts with the dynactin subunit p150 Glued and is a critical regulator of centrosomal protein recruitment.</title>
        <authorList>
            <person name="Kodani A."/>
            <person name="Tonthat V."/>
            <person name="Wu B."/>
            <person name="Suetterlin C."/>
        </authorList>
    </citation>
    <scope>INTERACTION WITH PARD6A</scope>
    <scope>SUBCELLULAR LOCATION</scope>
</reference>
<reference key="19">
    <citation type="journal article" date="2010" name="Mol. Cancer Ther.">
        <title>A novel human dynactin-associated protein, dynAP, promotes activation of Akt, and ergosterol-related compounds induce dynAP-dependent apoptosis of human cancer cells.</title>
        <authorList>
            <person name="Kunoh T."/>
            <person name="Noda T."/>
            <person name="Koseki K."/>
            <person name="Sekigawa M."/>
            <person name="Takagi M."/>
            <person name="Shin-ya K."/>
            <person name="Goshima N."/>
            <person name="Iemura S."/>
            <person name="Natsume T."/>
            <person name="Wada S."/>
            <person name="Mukai Y."/>
            <person name="Ohta S."/>
            <person name="Sasaki R."/>
            <person name="Mizukami T."/>
        </authorList>
    </citation>
    <scope>INTERACTION WITH DYNAP</scope>
</reference>
<reference key="20">
    <citation type="journal article" date="2010" name="Proc. Natl. Acad. Sci. U.S.A.">
        <title>Polo-like kinase 1 phosphorylation of p150Glued facilitates nuclear envelope breakdown during prophase.</title>
        <authorList>
            <person name="Li H."/>
            <person name="Liu X.S."/>
            <person name="Yang X."/>
            <person name="Song B."/>
            <person name="Wang Y."/>
            <person name="Liu X."/>
        </authorList>
    </citation>
    <scope>PHOSPHORYLATION AT SER-179 AND SER-212</scope>
    <scope>MUTAGENESIS OF SER-179 AND SER-212</scope>
    <scope>INTERACTION WITH PLK1 AND CLIP1</scope>
    <scope>SUBCELLULAR LOCATION</scope>
</reference>
<reference key="21">
    <citation type="journal article" date="2011" name="BMC Syst. Biol.">
        <title>Initial characterization of the human central proteome.</title>
        <authorList>
            <person name="Burkard T.R."/>
            <person name="Planyavsky M."/>
            <person name="Kaupe I."/>
            <person name="Breitwieser F.P."/>
            <person name="Buerckstuemmer T."/>
            <person name="Bennett K.L."/>
            <person name="Superti-Furga G."/>
            <person name="Colinge J."/>
        </authorList>
    </citation>
    <scope>IDENTIFICATION BY MASS SPECTROMETRY [LARGE SCALE ANALYSIS]</scope>
</reference>
<reference key="22">
    <citation type="journal article" date="2011" name="J. Cell Sci.">
        <title>Linking cytoplasmic dynein and transport of Rab8 vesicles to the midbody during cytokinesis by the doublecortin domain-containing 5 protein.</title>
        <authorList>
            <person name="Kaplan A."/>
            <person name="Reiner O."/>
        </authorList>
    </citation>
    <scope>INTERACTION WITH DCDC1</scope>
</reference>
<reference key="23">
    <citation type="journal article" date="2012" name="Cell. Mol. Life Sci.">
        <title>Neuronal ceroid lipofuscinosis protein CLN3 interacts with motor proteins and modifies location of late endosomal compartments.</title>
        <authorList>
            <person name="Uusi-Rauva K."/>
            <person name="Kyttala A."/>
            <person name="van der Kant R."/>
            <person name="Vesa J."/>
            <person name="Tanhuanpaa K."/>
            <person name="Neefjes J."/>
            <person name="Olkkonen V.M."/>
            <person name="Jalanko A."/>
        </authorList>
    </citation>
    <scope>INTERACTION WITH CLN3</scope>
</reference>
<reference key="24">
    <citation type="journal article" date="2012" name="J. Cell Sci.">
        <title>The centriolar satellite protein Cep131 is important for genome stability.</title>
        <authorList>
            <person name="Staples C.J."/>
            <person name="Myers K.N."/>
            <person name="Beveridge R.D."/>
            <person name="Patil A.A."/>
            <person name="Lee A.J."/>
            <person name="Swanton C."/>
            <person name="Howell M."/>
            <person name="Boulton S.J."/>
            <person name="Collis S.J."/>
        </authorList>
    </citation>
    <scope>INTERACTION WITH CEP131</scope>
</reference>
<reference key="25">
    <citation type="journal article" date="2012" name="Nat. Cell Biol.">
        <title>Chromosome- and spindle-pole-derived signals generate an intrinsic code for spindle position and orientation.</title>
        <authorList>
            <person name="Kiyomitsu T."/>
            <person name="Cheeseman I.M."/>
        </authorList>
    </citation>
    <scope>FUNCTION</scope>
    <scope>SUBCELLULAR LOCATION</scope>
</reference>
<reference key="26">
    <citation type="journal article" date="2013" name="EMBO J.">
        <title>Kif3a interacts with Dynactin subunit p150 Glued to organize centriole subdistal appendages.</title>
        <authorList>
            <person name="Kodani A."/>
            <person name="Salome Sirerol-Piquer M."/>
            <person name="Seol A."/>
            <person name="Garcia-Verdugo J.M."/>
            <person name="Reiter J.F."/>
        </authorList>
    </citation>
    <scope>FUNCTION</scope>
    <scope>SUBCELLULAR LOCATION</scope>
</reference>
<reference key="27">
    <citation type="journal article" date="2013" name="J. Cell Biol.">
        <title>MISP is a novel Plk1 substrate required for proper spindle orientation and mitotic progression.</title>
        <authorList>
            <person name="Zhu M."/>
            <person name="Settele F."/>
            <person name="Kotak S."/>
            <person name="Sanchez-Pulido L."/>
            <person name="Ehret L."/>
            <person name="Ponting C.P."/>
            <person name="Goenczy P."/>
            <person name="Hoffmann I."/>
        </authorList>
    </citation>
    <scope>INTERACTION WITH MISP</scope>
</reference>
<reference key="28">
    <citation type="journal article" date="2013" name="J. Proteome Res.">
        <title>Toward a comprehensive characterization of a human cancer cell phosphoproteome.</title>
        <authorList>
            <person name="Zhou H."/>
            <person name="Di Palma S."/>
            <person name="Preisinger C."/>
            <person name="Peng M."/>
            <person name="Polat A.N."/>
            <person name="Heck A.J."/>
            <person name="Mohammed S."/>
        </authorList>
    </citation>
    <scope>IDENTIFICATION BY MASS SPECTROMETRY [LARGE SCALE ANALYSIS]</scope>
    <source>
        <tissue>Erythroleukemia</tissue>
    </source>
</reference>
<reference key="29">
    <citation type="journal article" date="2013" name="Mol. Biol. Cell">
        <title>Ste20-like protein kinase SLK (LOSK) regulates microtubule organization by targeting dynactin to the centrosome.</title>
        <authorList>
            <person name="Zhapparova O.N."/>
            <person name="Fokin A.I."/>
            <person name="Vorobyeva N.E."/>
            <person name="Bryantseva S.A."/>
            <person name="Nadezhdina E.S."/>
        </authorList>
    </citation>
    <scope>PHOSPHORYLATION AT THR-145; THR-146 AND THR-147</scope>
    <scope>SUBCELLULAR LOCATION</scope>
    <scope>MUTAGENESIS OF THR-145; THR-146 AND THR-147</scope>
</reference>
<reference key="30">
    <citation type="journal article" date="2014" name="Biol. Cell">
        <title>Cep126 is required for pericentriolar satellite localisation to the centrosome and for primary cilium formation.</title>
        <authorList>
            <person name="Bonavita R."/>
            <person name="Walas D."/>
            <person name="Brown A.K."/>
            <person name="Luini A."/>
            <person name="Stephens D.J."/>
            <person name="Colanzi A."/>
        </authorList>
    </citation>
    <scope>INTERACTION WITH CEP126</scope>
</reference>
<reference key="31">
    <citation type="journal article" date="2014" name="J. Cell Sci.">
        <title>HPS6 interacts with dynactin p150Glued to mediate retrograde trafficking and maturation of lysosomes.</title>
        <authorList>
            <person name="Li K."/>
            <person name="Yang L."/>
            <person name="Zhang C."/>
            <person name="Niu Y."/>
            <person name="Li W."/>
            <person name="Liu J.J."/>
        </authorList>
    </citation>
    <scope>INTERACTION WITH HPS6</scope>
</reference>
<reference key="32">
    <citation type="journal article" date="2014" name="J. Proteomics">
        <title>An enzyme assisted RP-RPLC approach for in-depth analysis of human liver phosphoproteome.</title>
        <authorList>
            <person name="Bian Y."/>
            <person name="Song C."/>
            <person name="Cheng K."/>
            <person name="Dong M."/>
            <person name="Wang F."/>
            <person name="Huang J."/>
            <person name="Sun D."/>
            <person name="Wang L."/>
            <person name="Ye M."/>
            <person name="Zou H."/>
        </authorList>
    </citation>
    <scope>IDENTIFICATION BY MASS SPECTROMETRY [LARGE SCALE ANALYSIS]</scope>
    <source>
        <tissue>Liver</tissue>
    </source>
</reference>
<reference key="33">
    <citation type="journal article" date="2015" name="J. Cell. Biochem.">
        <title>Cell cycle-dependent localization of dynactin subunit p150 glued at centrosome.</title>
        <authorList>
            <person name="Chen T.Y."/>
            <person name="Syu J.S."/>
            <person name="Han T.Y."/>
            <person name="Cheng H.L."/>
            <person name="Lu F.I."/>
            <person name="Wang C.Y."/>
        </authorList>
    </citation>
    <scope>FUNCTION</scope>
    <scope>SUBCELLULAR LOCATION</scope>
</reference>
<reference key="34">
    <citation type="journal article" date="2016" name="EMBO J.">
        <title>Tyrosination of alpha-tubulin controls the initiation of processive dynein-dynactin motility.</title>
        <authorList>
            <person name="McKenney R.J."/>
            <person name="Huynh W."/>
            <person name="Vale R.D."/>
            <person name="Sirajuddin M."/>
        </authorList>
    </citation>
    <scope>ASSOCIATION WITH MICROTUBULES</scope>
    <scope>DOMAIN CAP-GLY</scope>
</reference>
<reference key="35">
    <citation type="journal article" date="2017" name="Oncogene">
        <title>Regulation of spindle integrity and mitotic fidelity by BCCIP.</title>
        <authorList>
            <person name="Huhn S.C."/>
            <person name="Liu J."/>
            <person name="Ye C."/>
            <person name="Lu H."/>
            <person name="Jiang X."/>
            <person name="Feng X."/>
            <person name="Ganesan S."/>
            <person name="White E."/>
            <person name="Shen Z."/>
        </authorList>
    </citation>
    <scope>INTERACTION WITH BCCIP</scope>
</reference>
<reference key="36">
    <citation type="journal article" date="2005" name="Mol. Cell">
        <title>Structural basis for the activation of microtubule assembly by the EB1 and p150Glued complex.</title>
        <authorList>
            <person name="Hayashi I."/>
            <person name="Wilde A."/>
            <person name="Mal T.K."/>
            <person name="Ikura M."/>
        </authorList>
    </citation>
    <scope>X-RAY CRYSTALLOGRAPHY (1.80 ANGSTROMS) OF 15-107 IN COMPLEX WITH MAPRE1</scope>
    <scope>INTERACTION WITH MAPRE1</scope>
</reference>
<reference key="37">
    <citation type="submission" date="2005-11" db="PDB data bank">
        <title>Solution structure of the CAP-Gly domain in human dynactin 1.</title>
        <authorList>
            <consortium name="RIKEN structural genomics initiative (RSGI)"/>
        </authorList>
    </citation>
    <scope>STRUCTURE BY NMR OF 1-99</scope>
</reference>
<reference key="38">
    <citation type="journal article" date="2006" name="Mol. Cell">
        <title>Key interaction modes of dynamic +TIP networks.</title>
        <authorList>
            <person name="Honnappa S."/>
            <person name="Okhrimenko O."/>
            <person name="Jaussi R."/>
            <person name="Jawhari H."/>
            <person name="Jelesarov I."/>
            <person name="Winkler F.K."/>
            <person name="Steinmetz M.O."/>
        </authorList>
    </citation>
    <scope>X-RAY CRYSTALLOGRAPHY (1.86 ANGSTROMS) OF 18-111 IN COMPLEX WITH MAPRE1</scope>
    <scope>INTERACTION WITH MAPRE1</scope>
</reference>
<reference key="39">
    <citation type="journal article" date="2007" name="Nat. Struct. Mol. Biol.">
        <title>Structure-function relationship of CAP-Gly domains.</title>
        <authorList>
            <person name="Weisbrich A."/>
            <person name="Honnappa S."/>
            <person name="Jaussi R."/>
            <person name="Okhrimenko O."/>
            <person name="Frey D."/>
            <person name="Jelesarov I."/>
            <person name="Akhmanova A."/>
            <person name="Steinmetz M.O."/>
        </authorList>
    </citation>
    <scope>X-RAY CRYSTALLOGRAPHY (2.60 ANGSTROMS) OF 15-111 IN COMPLEX WITH CLIP1</scope>
    <scope>SUBCELLULAR LOCATION</scope>
    <scope>INTERACTION WITH CLIP1</scope>
</reference>
<reference key="40">
    <citation type="journal article" date="2007" name="Nat. Struct. Mol. Biol.">
        <title>CLIP170 autoinhibition mimics intermolecular interactions with p150Glued or EB1.</title>
        <authorList>
            <person name="Hayashi I."/>
            <person name="Plevin M.J."/>
            <person name="Ikura M."/>
        </authorList>
    </citation>
    <scope>X-RAY CRYSTALLOGRAPHY (1.80 ANGSTROMS) OF 15-107 IN COMPLEX WITH CLIP1</scope>
    <scope>INTERACTION WITH CLIP1</scope>
    <scope>MUTAGENESIS OF LYS-68 AND ARG-90</scope>
</reference>
<reference key="41">
    <citation type="journal article" date="2003" name="Nat. Genet.">
        <title>Mutant dynactin in motor neuron disease.</title>
        <authorList>
            <person name="Puls I."/>
            <person name="Jonnakuty C."/>
            <person name="LaMonte B.H."/>
            <person name="Holzbaur E.L."/>
            <person name="Tokito M."/>
            <person name="Mann E."/>
            <person name="Floeter M.K."/>
            <person name="Bidus K."/>
            <person name="Drayna D."/>
            <person name="Oh S.J."/>
            <person name="Brown R.H. Jr."/>
            <person name="Ludlow C.L."/>
            <person name="Fischbeck K.H."/>
        </authorList>
    </citation>
    <scope>VARIANT HMND14 SER-59</scope>
</reference>
<reference key="42">
    <citation type="journal article" date="2004" name="Neurology">
        <title>Point mutations of the p150 subunit of dynactin (DCTN1) gene in ALS.</title>
        <authorList>
            <person name="Muench C."/>
            <person name="Sedlmeier R."/>
            <person name="Meyer T."/>
            <person name="Homberg V."/>
            <person name="Sperfeld A.D."/>
            <person name="Kurt A."/>
            <person name="Prudlo J."/>
            <person name="Peraus G."/>
            <person name="Hanemann C.O."/>
            <person name="Stumm G."/>
            <person name="Ludolph A.C."/>
        </authorList>
    </citation>
    <scope>INVOLVEMENT IN ALS</scope>
    <scope>VARIANTS ALS THR-571; TRP-785 AND ILE-1249</scope>
</reference>
<reference key="43">
    <citation type="journal article" date="2005" name="Ann. Neurol.">
        <title>Heterozygous R1101K mutation of the DCTN1 gene in a family with ALS and FTD.</title>
        <authorList>
            <person name="Muench C."/>
            <person name="Rosenbohm A."/>
            <person name="Sperfeld A.-D."/>
            <person name="Uttner I."/>
            <person name="Reske S."/>
            <person name="Krause B.J."/>
            <person name="Sedlmeier R."/>
            <person name="Meyer T."/>
            <person name="Hanemann C.O."/>
            <person name="Stumm G."/>
            <person name="Ludolph A.C."/>
        </authorList>
    </citation>
    <scope>VARIANT ALS LYS-1101</scope>
</reference>
<reference key="44">
    <citation type="journal article" date="2006" name="J. Cell Biol.">
        <title>A motor neuron disease-associated mutation in p150Glued perturbs dynactin function and induces protein aggregation.</title>
        <authorList>
            <person name="Levy J.R."/>
            <person name="Sumner C.J."/>
            <person name="Caviston J.P."/>
            <person name="Tokito M.K."/>
            <person name="Ranganathan S."/>
            <person name="Ligon L.A."/>
            <person name="Wallace K.E."/>
            <person name="LaMonte B.H."/>
            <person name="Harmison G.G."/>
            <person name="Puls I."/>
            <person name="Fischbeck K.H."/>
            <person name="Holzbaur E.L.F."/>
        </authorList>
    </citation>
    <scope>CHARACTERIZATION OF VARIANT HMND14 SER-59</scope>
    <scope>INTERACTION WITH MAPRE1</scope>
</reference>
<reference key="45">
    <citation type="journal article" date="2007" name="Acta Neurol. Scand.">
        <title>The p150 subunit of dynactin (DCTN1) gene in multiple sclerosis.</title>
        <authorList>
            <person name="Muench C."/>
            <person name="Meyer R."/>
            <person name="Linke P."/>
            <person name="Meyer T."/>
            <person name="Ludolph A.C."/>
            <person name="Haas J."/>
            <person name="Hemmer B."/>
        </authorList>
    </citation>
    <scope>VARIANTS VAL-196; GLN-495 AND ILE-1249</scope>
</reference>
<reference key="46">
    <citation type="journal article" date="2009" name="Nat. Genet.">
        <title>DCTN1 mutations in Perry syndrome.</title>
        <authorList>
            <person name="Farrer M.J."/>
            <person name="Hulihan M.M."/>
            <person name="Kachergus J.M."/>
            <person name="Daechsel J.C."/>
            <person name="Stoessl A.J."/>
            <person name="Grantier L.L."/>
            <person name="Calne S."/>
            <person name="Calne D.B."/>
            <person name="Lechevalier B."/>
            <person name="Chapon F."/>
            <person name="Tsuboi Y."/>
            <person name="Yamada T."/>
            <person name="Gutmann L."/>
            <person name="Elibol B."/>
            <person name="Bhatia K.P."/>
            <person name="Wider C."/>
            <person name="Vilarino-Gueell C."/>
            <person name="Ross O.A."/>
            <person name="Brown L.A."/>
            <person name="Castanedes-Casey M."/>
            <person name="Dickson D.W."/>
            <person name="Wszolek Z.K."/>
        </authorList>
    </citation>
    <scope>VARIANTS PERRYS ARG-71; GLU-71; ALA-71; PRO-72 AND PRO-74</scope>
    <scope>CHARACTERIZATION OF VARIANTS PERRYS ARG-71 AND PRO-74</scope>
    <scope>CHARACTERIZATION OF VARIANT HMND14 SER-59</scope>
</reference>
<reference key="47">
    <citation type="journal article" date="2009" name="Neurology">
        <title>Characterization of DCTN1 genetic variability in neurodegeneration.</title>
        <authorList>
            <person name="Vilarino-Gueell C."/>
            <person name="Wider C."/>
            <person name="Soto-Ortolaza A.I."/>
            <person name="Cobb S.A."/>
            <person name="Kachergus J.M."/>
            <person name="Keeling B.H."/>
            <person name="Dachsel J.C."/>
            <person name="Hulihan M.M."/>
            <person name="Dickson D.W."/>
            <person name="Wszolek Z.K."/>
            <person name="Uitti R.J."/>
            <person name="Graff-Radford N.R."/>
            <person name="Boeve B.F."/>
            <person name="Josephs K.A."/>
            <person name="Miller B."/>
            <person name="Boylan K.B."/>
            <person name="Gwinn K."/>
            <person name="Adler C.H."/>
            <person name="Aasly J.O."/>
            <person name="Hentati F."/>
            <person name="Destee A."/>
            <person name="Krygowska-Wajs A."/>
            <person name="Chartier-Harlin M.-C."/>
            <person name="Ross O.A."/>
            <person name="Rademakers R."/>
            <person name="Farrer M.J."/>
        </authorList>
    </citation>
    <scope>VARIANT ILE-1249</scope>
</reference>
<reference key="48">
    <citation type="journal article" date="2009" name="Proc. Natl. Acad. Sci. U.S.A.">
        <title>Neurodegeneration mutations in dynactin impair dynein-dependent nuclear migration.</title>
        <authorList>
            <person name="Moore J.K."/>
            <person name="Sept D."/>
            <person name="Cooper J.A."/>
        </authorList>
    </citation>
    <scope>CHARACTERIZATION OF VARIANT HMND14 SER-59</scope>
</reference>
<reference key="49">
    <citation type="journal article" date="2012" name="Cell Tissue Res.">
        <title>Tubulin-binding cofactor B is a direct interaction partner of the dynactin subunit p150(Glued).</title>
        <authorList>
            <person name="Kuh G.F."/>
            <person name="Stockmann M."/>
            <person name="Meyer-Ohlendorf M."/>
            <person name="Linta L."/>
            <person name="Proepper C."/>
            <person name="Ludolph A.C."/>
            <person name="Bockmann J."/>
            <person name="Boeckers T.M."/>
            <person name="Liebau S."/>
        </authorList>
    </citation>
    <scope>CHARACTERIZATION OF VARIANT HMND14 SER-59</scope>
    <scope>CHARACTERIZATION OF VARIANT 196-ILE</scope>
    <scope>INTERACTION WITH TBCB</scope>
    <scope>SUBCELLULAR LOCATION</scope>
</reference>
<reference key="50">
    <citation type="journal article" date="2013" name="PLoS Biol.">
        <title>Dynactin subunit p150(Glued) is a neuron-specific anti-catastrophe factor.</title>
        <authorList>
            <person name="Lazarus J.E."/>
            <person name="Moughamian A.J."/>
            <person name="Tokito M.K."/>
            <person name="Holzbaur E.L."/>
        </authorList>
    </citation>
    <scope>CHARACTERIZATION OF VARIANT PERRYS PRO-74</scope>
    <scope>FUNCTION</scope>
    <scope>SUBUNIT</scope>
    <scope>INTERACTION WITH MAPRE1</scope>
</reference>
<reference key="51">
    <citation type="journal article" date="2014" name="J. Neurol.">
        <title>Whole-exome sequencing in patients with inherited neuropathies: outcome and challenges.</title>
        <authorList>
            <person name="Schabhuettl M."/>
            <person name="Wieland T."/>
            <person name="Senderek J."/>
            <person name="Baets J."/>
            <person name="Timmerman V."/>
            <person name="De Jonghe P."/>
            <person name="Reilly M.M."/>
            <person name="Stieglbauer K."/>
            <person name="Laich E."/>
            <person name="Windhager R."/>
            <person name="Erwa W."/>
            <person name="Trajanoski S."/>
            <person name="Strom T.M."/>
            <person name="Auer-Grumbach M."/>
        </authorList>
    </citation>
    <scope>VARIANT PHE-670</scope>
</reference>
<reference key="52">
    <citation type="journal article" date="2014" name="Mov. Disord.">
        <title>A Novel DCTN1 mutation with late-onset parkinsonism and frontotemporal atrophy.</title>
        <authorList>
            <person name="Araki E."/>
            <person name="Tsuboi Y."/>
            <person name="Daechsel J."/>
            <person name="Milnerwood A."/>
            <person name="Vilarino-Guell C."/>
            <person name="Fujii N."/>
            <person name="Mishima T."/>
            <person name="Oka T."/>
            <person name="Hara H."/>
            <person name="Fukae J."/>
            <person name="Farrer M.J."/>
        </authorList>
    </citation>
    <scope>VARIANT PERRYS LEU-52</scope>
</reference>
<reference key="53">
    <citation type="journal article" date="2014" name="Nat. Commun.">
        <title>Dynactin functions as both a dynamic tether and brake during dynein-driven motility.</title>
        <authorList>
            <person name="Ayloo S."/>
            <person name="Lazarus J.E."/>
            <person name="Dodda A."/>
            <person name="Tokito M."/>
            <person name="Ostap E.M."/>
            <person name="Holzbaur E.L."/>
        </authorList>
    </citation>
    <scope>CHARACTERIZATION OF VARIANTS PERRYS ARG-71 AND PRO-74</scope>
    <scope>FUNCTION</scope>
    <scope>INTERACTION WITH DYNEIN INTERMEDIATE CHAIN AND DYNEIN HEAVY CHAIN</scope>
    <scope>DOMAIN CAP-GLY</scope>
</reference>
<reference key="54">
    <citation type="journal article" date="2014" name="Parkinsonism Relat. Disord.">
        <title>Three families with Perry syndrome from distinct parts of the world.</title>
        <authorList>
            <person name="Tacik P."/>
            <person name="Fiesel F.C."/>
            <person name="Fujioka S."/>
            <person name="Ross O.A."/>
            <person name="Pretelt F."/>
            <person name="Castaneda Cardona C."/>
            <person name="Kidd A."/>
            <person name="Hlavac M."/>
            <person name="Raizis A."/>
            <person name="Okun M.S."/>
            <person name="Traynor S."/>
            <person name="Strongosky A.J."/>
            <person name="Springer W."/>
            <person name="Wszolek Z.K."/>
        </authorList>
    </citation>
    <scope>VARIANTS PERRYS ARG-71 AND CYS-78</scope>
    <scope>CHARACTERIZATION OF VARIANTS PERRYS ARG-71 AND CYS-78</scope>
</reference>
<reference key="55">
    <citation type="journal article" date="2016" name="Cell Rep.">
        <title>Alpha-tubulin tyrosination and CLIP-170 phosphorylation regulate the initiation of dynein-driven transport in neurons.</title>
        <authorList>
            <person name="Nirschl J.J."/>
            <person name="Magiera M.M."/>
            <person name="Lazarus J.E."/>
            <person name="Janke C."/>
            <person name="Holzbaur E.L."/>
        </authorList>
    </citation>
    <scope>CHARACTERIZATION OF VARIANT PERRYS ARG-71</scope>
    <scope>SUBCELLULAR LOCATION</scope>
    <scope>DOMAIN CAP-GLY</scope>
    <scope>INTERACTION WITH CLIP1</scope>
    <scope>ASSOCIATION WITH MICROTUBULES</scope>
</reference>
<reference key="56">
    <citation type="journal article" date="2022" name="Nat. Commun.">
        <title>RUFY3 and RUFY4 are ARL8 effectors that promote coupling of endolysosomes to dynein-dynactin.</title>
        <authorList>
            <person name="Keren-Kaplan T."/>
            <person name="Saric A."/>
            <person name="Ghosh S."/>
            <person name="Williamson C.D."/>
            <person name="Jia R."/>
            <person name="Li Y."/>
            <person name="Bonifacino J.S."/>
        </authorList>
    </citation>
    <scope>INTERACTION WITH RUFY3 AND RUFY4</scope>
</reference>
<gene>
    <name evidence="50" type="primary">DCTN1</name>
</gene>
<name>DCTN1_HUMAN</name>
<protein>
    <recommendedName>
        <fullName>Dynactin subunit 1</fullName>
    </recommendedName>
    <alternativeName>
        <fullName>150 kDa dynein-associated polypeptide</fullName>
    </alternativeName>
    <alternativeName>
        <fullName>DAP-150</fullName>
        <shortName>DP-150</shortName>
    </alternativeName>
    <alternativeName>
        <fullName>p135</fullName>
    </alternativeName>
    <alternativeName>
        <fullName>p150-glued</fullName>
    </alternativeName>
</protein>
<dbReference type="EMBL" id="AF064205">
    <property type="protein sequence ID" value="AAD55811.1"/>
    <property type="molecule type" value="Genomic_DNA"/>
</dbReference>
<dbReference type="EMBL" id="AF064203">
    <property type="protein sequence ID" value="AAD55811.1"/>
    <property type="status" value="JOINED"/>
    <property type="molecule type" value="Genomic_DNA"/>
</dbReference>
<dbReference type="EMBL" id="AF064204">
    <property type="protein sequence ID" value="AAD55811.1"/>
    <property type="status" value="JOINED"/>
    <property type="molecule type" value="Genomic_DNA"/>
</dbReference>
<dbReference type="EMBL" id="AF064205">
    <property type="protein sequence ID" value="AAD55812.1"/>
    <property type="molecule type" value="Genomic_DNA"/>
</dbReference>
<dbReference type="EMBL" id="AF064204">
    <property type="protein sequence ID" value="AAD55812.1"/>
    <property type="status" value="JOINED"/>
    <property type="molecule type" value="Genomic_DNA"/>
</dbReference>
<dbReference type="EMBL" id="AK297286">
    <property type="protein sequence ID" value="BAG59757.1"/>
    <property type="molecule type" value="mRNA"/>
</dbReference>
<dbReference type="EMBL" id="AK314352">
    <property type="status" value="NOT_ANNOTATED_CDS"/>
    <property type="molecule type" value="mRNA"/>
</dbReference>
<dbReference type="EMBL" id="AC005041">
    <property type="status" value="NOT_ANNOTATED_CDS"/>
    <property type="molecule type" value="Genomic_DNA"/>
</dbReference>
<dbReference type="EMBL" id="CH471053">
    <property type="protein sequence ID" value="EAW99684.1"/>
    <property type="molecule type" value="Genomic_DNA"/>
</dbReference>
<dbReference type="EMBL" id="BC071583">
    <property type="protein sequence ID" value="AAH71583.1"/>
    <property type="molecule type" value="mRNA"/>
</dbReference>
<dbReference type="EMBL" id="X98801">
    <property type="protein sequence ID" value="CAA67333.1"/>
    <property type="molecule type" value="mRNA"/>
</dbReference>
<dbReference type="EMBL" id="AF086947">
    <property type="protein sequence ID" value="AAD03694.1"/>
    <property type="molecule type" value="Genomic_DNA"/>
</dbReference>
<dbReference type="EMBL" id="AF086927">
    <property type="protein sequence ID" value="AAD03694.1"/>
    <property type="status" value="JOINED"/>
    <property type="molecule type" value="Genomic_DNA"/>
</dbReference>
<dbReference type="EMBL" id="AF086928">
    <property type="protein sequence ID" value="AAD03694.1"/>
    <property type="status" value="JOINED"/>
    <property type="molecule type" value="Genomic_DNA"/>
</dbReference>
<dbReference type="EMBL" id="AF086929">
    <property type="protein sequence ID" value="AAD03694.1"/>
    <property type="status" value="JOINED"/>
    <property type="molecule type" value="Genomic_DNA"/>
</dbReference>
<dbReference type="EMBL" id="AF086930">
    <property type="protein sequence ID" value="AAD03694.1"/>
    <property type="status" value="JOINED"/>
    <property type="molecule type" value="Genomic_DNA"/>
</dbReference>
<dbReference type="EMBL" id="AF086931">
    <property type="protein sequence ID" value="AAD03694.1"/>
    <property type="status" value="JOINED"/>
    <property type="molecule type" value="Genomic_DNA"/>
</dbReference>
<dbReference type="EMBL" id="AF086932">
    <property type="protein sequence ID" value="AAD03694.1"/>
    <property type="status" value="JOINED"/>
    <property type="molecule type" value="Genomic_DNA"/>
</dbReference>
<dbReference type="EMBL" id="AF086933">
    <property type="protein sequence ID" value="AAD03694.1"/>
    <property type="status" value="JOINED"/>
    <property type="molecule type" value="Genomic_DNA"/>
</dbReference>
<dbReference type="EMBL" id="AF086934">
    <property type="protein sequence ID" value="AAD03694.1"/>
    <property type="status" value="JOINED"/>
    <property type="molecule type" value="Genomic_DNA"/>
</dbReference>
<dbReference type="EMBL" id="AF086935">
    <property type="protein sequence ID" value="AAD03694.1"/>
    <property type="status" value="JOINED"/>
    <property type="molecule type" value="Genomic_DNA"/>
</dbReference>
<dbReference type="EMBL" id="AF086936">
    <property type="protein sequence ID" value="AAD03694.1"/>
    <property type="status" value="JOINED"/>
    <property type="molecule type" value="Genomic_DNA"/>
</dbReference>
<dbReference type="EMBL" id="AF086937">
    <property type="protein sequence ID" value="AAD03694.1"/>
    <property type="status" value="JOINED"/>
    <property type="molecule type" value="Genomic_DNA"/>
</dbReference>
<dbReference type="EMBL" id="AF086938">
    <property type="protein sequence ID" value="AAD03694.1"/>
    <property type="status" value="JOINED"/>
    <property type="molecule type" value="Genomic_DNA"/>
</dbReference>
<dbReference type="EMBL" id="AF086939">
    <property type="protein sequence ID" value="AAD03694.1"/>
    <property type="status" value="JOINED"/>
    <property type="molecule type" value="Genomic_DNA"/>
</dbReference>
<dbReference type="EMBL" id="AF086940">
    <property type="protein sequence ID" value="AAD03694.1"/>
    <property type="status" value="JOINED"/>
    <property type="molecule type" value="Genomic_DNA"/>
</dbReference>
<dbReference type="EMBL" id="AF086941">
    <property type="protein sequence ID" value="AAD03694.1"/>
    <property type="status" value="JOINED"/>
    <property type="molecule type" value="Genomic_DNA"/>
</dbReference>
<dbReference type="EMBL" id="AF086942">
    <property type="protein sequence ID" value="AAD03694.1"/>
    <property type="status" value="JOINED"/>
    <property type="molecule type" value="Genomic_DNA"/>
</dbReference>
<dbReference type="EMBL" id="AF086943">
    <property type="protein sequence ID" value="AAD03694.1"/>
    <property type="status" value="JOINED"/>
    <property type="molecule type" value="Genomic_DNA"/>
</dbReference>
<dbReference type="EMBL" id="AF086944">
    <property type="protein sequence ID" value="AAD03694.1"/>
    <property type="status" value="JOINED"/>
    <property type="molecule type" value="Genomic_DNA"/>
</dbReference>
<dbReference type="EMBL" id="AF086945">
    <property type="protein sequence ID" value="AAD03694.1"/>
    <property type="status" value="JOINED"/>
    <property type="molecule type" value="Genomic_DNA"/>
</dbReference>
<dbReference type="EMBL" id="AF086946">
    <property type="protein sequence ID" value="AAD03694.1"/>
    <property type="status" value="JOINED"/>
    <property type="molecule type" value="Genomic_DNA"/>
</dbReference>
<dbReference type="EMBL" id="BT006758">
    <property type="protein sequence ID" value="AAP35404.1"/>
    <property type="molecule type" value="mRNA"/>
</dbReference>
<dbReference type="CCDS" id="CCDS1939.1">
    <molecule id="Q14203-1"/>
</dbReference>
<dbReference type="CCDS" id="CCDS46341.1">
    <molecule id="Q14203-4"/>
</dbReference>
<dbReference type="CCDS" id="CCDS46342.1">
    <molecule id="Q14203-5"/>
</dbReference>
<dbReference type="CCDS" id="CCDS46343.1">
    <molecule id="Q14203-2"/>
</dbReference>
<dbReference type="CCDS" id="CCDS54368.1">
    <molecule id="Q14203-3"/>
</dbReference>
<dbReference type="CCDS" id="CCDS54369.1">
    <molecule id="Q14203-6"/>
</dbReference>
<dbReference type="RefSeq" id="NP_001128512.1">
    <molecule id="Q14203-4"/>
    <property type="nucleotide sequence ID" value="NM_001135040.3"/>
</dbReference>
<dbReference type="RefSeq" id="NP_001128513.1">
    <molecule id="Q14203-5"/>
    <property type="nucleotide sequence ID" value="NM_001135041.3"/>
</dbReference>
<dbReference type="RefSeq" id="NP_001177765.1">
    <molecule id="Q14203-3"/>
    <property type="nucleotide sequence ID" value="NM_001190836.2"/>
</dbReference>
<dbReference type="RefSeq" id="NP_001177766.1">
    <molecule id="Q14203-6"/>
    <property type="nucleotide sequence ID" value="NM_001190837.2"/>
</dbReference>
<dbReference type="RefSeq" id="NP_004073.2">
    <molecule id="Q14203-1"/>
    <property type="nucleotide sequence ID" value="NM_004082.4"/>
</dbReference>
<dbReference type="RefSeq" id="NP_075408.1">
    <molecule id="Q14203-2"/>
    <property type="nucleotide sequence ID" value="NM_023019.4"/>
</dbReference>
<dbReference type="PDB" id="1TXQ">
    <property type="method" value="X-ray"/>
    <property type="resolution" value="1.80 A"/>
    <property type="chains" value="A=15-107"/>
</dbReference>
<dbReference type="PDB" id="2COY">
    <property type="method" value="NMR"/>
    <property type="chains" value="A=1-99"/>
</dbReference>
<dbReference type="PDB" id="2HKN">
    <property type="method" value="X-ray"/>
    <property type="resolution" value="1.87 A"/>
    <property type="chains" value="A/B=18-111"/>
</dbReference>
<dbReference type="PDB" id="2HKQ">
    <property type="method" value="X-ray"/>
    <property type="resolution" value="1.86 A"/>
    <property type="chains" value="B=18-111"/>
</dbReference>
<dbReference type="PDB" id="2HL3">
    <property type="method" value="X-ray"/>
    <property type="resolution" value="2.03 A"/>
    <property type="chains" value="A/B=18-111"/>
</dbReference>
<dbReference type="PDB" id="2HL5">
    <property type="method" value="X-ray"/>
    <property type="resolution" value="1.93 A"/>
    <property type="chains" value="C/D=18-111"/>
</dbReference>
<dbReference type="PDB" id="2HQH">
    <property type="method" value="X-ray"/>
    <property type="resolution" value="1.80 A"/>
    <property type="chains" value="A/B/C/D=15-107"/>
</dbReference>
<dbReference type="PDB" id="3E2U">
    <property type="method" value="X-ray"/>
    <property type="resolution" value="2.60 A"/>
    <property type="chains" value="A/B/C/D=18-111"/>
</dbReference>
<dbReference type="PDB" id="3TQ7">
    <property type="method" value="X-ray"/>
    <property type="resolution" value="2.30 A"/>
    <property type="chains" value="P/Q=27-97"/>
</dbReference>
<dbReference type="PDBsum" id="1TXQ"/>
<dbReference type="PDBsum" id="2COY"/>
<dbReference type="PDBsum" id="2HKN"/>
<dbReference type="PDBsum" id="2HKQ"/>
<dbReference type="PDBsum" id="2HL3"/>
<dbReference type="PDBsum" id="2HL5"/>
<dbReference type="PDBsum" id="2HQH"/>
<dbReference type="PDBsum" id="3E2U"/>
<dbReference type="PDBsum" id="3TQ7"/>
<dbReference type="BMRB" id="Q14203"/>
<dbReference type="EMDB" id="EMD-2673"/>
<dbReference type="EMDB" id="EMD-2674"/>
<dbReference type="EMDB" id="EMD-2675"/>
<dbReference type="SMR" id="Q14203"/>
<dbReference type="BioGRID" id="108007">
    <property type="interactions" value="488"/>
</dbReference>
<dbReference type="CORUM" id="Q14203"/>
<dbReference type="DIP" id="DIP-31365N"/>
<dbReference type="FunCoup" id="Q14203">
    <property type="interactions" value="1563"/>
</dbReference>
<dbReference type="IntAct" id="Q14203">
    <property type="interactions" value="307"/>
</dbReference>
<dbReference type="MINT" id="Q14203"/>
<dbReference type="STRING" id="9606.ENSP00000354791"/>
<dbReference type="CarbonylDB" id="Q14203"/>
<dbReference type="GlyCosmos" id="Q14203">
    <property type="glycosylation" value="1 site, 1 glycan"/>
</dbReference>
<dbReference type="GlyGen" id="Q14203">
    <property type="glycosylation" value="3 sites, 1 O-linked glycan (1 site)"/>
</dbReference>
<dbReference type="iPTMnet" id="Q14203"/>
<dbReference type="MetOSite" id="Q14203"/>
<dbReference type="PhosphoSitePlus" id="Q14203"/>
<dbReference type="SwissPalm" id="Q14203"/>
<dbReference type="BioMuta" id="DCTN1"/>
<dbReference type="DMDM" id="17375490"/>
<dbReference type="OGP" id="Q14203"/>
<dbReference type="jPOST" id="Q14203"/>
<dbReference type="MassIVE" id="Q14203"/>
<dbReference type="PaxDb" id="9606-ENSP00000354791"/>
<dbReference type="PeptideAtlas" id="Q14203"/>
<dbReference type="ProteomicsDB" id="20166"/>
<dbReference type="ProteomicsDB" id="20302"/>
<dbReference type="ProteomicsDB" id="2371"/>
<dbReference type="ProteomicsDB" id="33940"/>
<dbReference type="ProteomicsDB" id="59925">
    <molecule id="Q14203-1"/>
</dbReference>
<dbReference type="ProteomicsDB" id="59926">
    <molecule id="Q14203-2"/>
</dbReference>
<dbReference type="Pumba" id="Q14203"/>
<dbReference type="ABCD" id="Q14203">
    <property type="antibodies" value="1 sequenced antibody"/>
</dbReference>
<dbReference type="Antibodypedia" id="3966">
    <property type="antibodies" value="327 antibodies from 41 providers"/>
</dbReference>
<dbReference type="DNASU" id="1639"/>
<dbReference type="Ensembl" id="ENST00000394003.7">
    <molecule id="Q14203-6"/>
    <property type="protein sequence ID" value="ENSP00000377571.3"/>
    <property type="gene ID" value="ENSG00000204843.13"/>
</dbReference>
<dbReference type="Ensembl" id="ENST00000409240.5">
    <molecule id="Q14203-3"/>
    <property type="protein sequence ID" value="ENSP00000386406.1"/>
    <property type="gene ID" value="ENSG00000204843.13"/>
</dbReference>
<dbReference type="Ensembl" id="ENST00000409438.5">
    <molecule id="Q14203-5"/>
    <property type="protein sequence ID" value="ENSP00000387270.1"/>
    <property type="gene ID" value="ENSG00000204843.13"/>
</dbReference>
<dbReference type="Ensembl" id="ENST00000409567.7">
    <molecule id="Q14203-4"/>
    <property type="protein sequence ID" value="ENSP00000386843.3"/>
    <property type="gene ID" value="ENSG00000204843.13"/>
</dbReference>
<dbReference type="Ensembl" id="ENST00000628224.3">
    <molecule id="Q14203-1"/>
    <property type="protein sequence ID" value="ENSP00000487279.2"/>
    <property type="gene ID" value="ENSG00000204843.13"/>
</dbReference>
<dbReference type="Ensembl" id="ENST00000633691.1">
    <molecule id="Q14203-2"/>
    <property type="protein sequence ID" value="ENSP00000487724.1"/>
    <property type="gene ID" value="ENSG00000204843.13"/>
</dbReference>
<dbReference type="GeneID" id="1639"/>
<dbReference type="KEGG" id="hsa:1639"/>
<dbReference type="MANE-Select" id="ENST00000628224.3">
    <property type="protein sequence ID" value="ENSP00000487279.2"/>
    <property type="RefSeq nucleotide sequence ID" value="NM_004082.5"/>
    <property type="RefSeq protein sequence ID" value="NP_004073.2"/>
</dbReference>
<dbReference type="UCSC" id="uc002sku.4">
    <molecule id="Q14203-1"/>
    <property type="organism name" value="human"/>
</dbReference>
<dbReference type="AGR" id="HGNC:2711"/>
<dbReference type="CTD" id="1639"/>
<dbReference type="DisGeNET" id="1639"/>
<dbReference type="GeneCards" id="DCTN1"/>
<dbReference type="GeneReviews" id="DCTN1"/>
<dbReference type="HGNC" id="HGNC:2711">
    <property type="gene designation" value="DCTN1"/>
</dbReference>
<dbReference type="HPA" id="ENSG00000204843">
    <property type="expression patterns" value="Low tissue specificity"/>
</dbReference>
<dbReference type="MalaCards" id="DCTN1"/>
<dbReference type="MIM" id="105400">
    <property type="type" value="phenotype"/>
</dbReference>
<dbReference type="MIM" id="168605">
    <property type="type" value="phenotype"/>
</dbReference>
<dbReference type="MIM" id="601143">
    <property type="type" value="gene"/>
</dbReference>
<dbReference type="MIM" id="607641">
    <property type="type" value="phenotype"/>
</dbReference>
<dbReference type="neXtProt" id="NX_Q14203"/>
<dbReference type="OpenTargets" id="ENSG00000204843"/>
<dbReference type="Orphanet" id="803">
    <property type="disease" value="Amyotrophic lateral sclerosis"/>
</dbReference>
<dbReference type="Orphanet" id="139589">
    <property type="disease" value="Distal hereditary motor neuropathy type 7"/>
</dbReference>
<dbReference type="Orphanet" id="178509">
    <property type="disease" value="Perry syndrome"/>
</dbReference>
<dbReference type="PharmGKB" id="PA27180"/>
<dbReference type="VEuPathDB" id="HostDB:ENSG00000204843"/>
<dbReference type="eggNOG" id="KOG0971">
    <property type="taxonomic scope" value="Eukaryota"/>
</dbReference>
<dbReference type="GeneTree" id="ENSGT00940000155378"/>
<dbReference type="HOGENOM" id="CLU_002523_0_0_1"/>
<dbReference type="InParanoid" id="Q14203"/>
<dbReference type="OMA" id="LFEMEPV"/>
<dbReference type="OrthoDB" id="2130750at2759"/>
<dbReference type="PAN-GO" id="Q14203">
    <property type="GO annotations" value="11 GO annotations based on evolutionary models"/>
</dbReference>
<dbReference type="PhylomeDB" id="Q14203"/>
<dbReference type="TreeFam" id="TF105246"/>
<dbReference type="PathwayCommons" id="Q14203"/>
<dbReference type="Reactome" id="R-HSA-2132295">
    <property type="pathway name" value="MHC class II antigen presentation"/>
</dbReference>
<dbReference type="Reactome" id="R-HSA-2565942">
    <molecule id="Q14203-2"/>
    <property type="pathway name" value="Regulation of PLK1 Activity at G2/M Transition"/>
</dbReference>
<dbReference type="Reactome" id="R-HSA-3371497">
    <property type="pathway name" value="HSP90 chaperone cycle for steroid hormone receptors (SHR) in the presence of ligand"/>
</dbReference>
<dbReference type="Reactome" id="R-HSA-380259">
    <molecule id="Q14203-2"/>
    <property type="pathway name" value="Loss of Nlp from mitotic centrosomes"/>
</dbReference>
<dbReference type="Reactome" id="R-HSA-380270">
    <molecule id="Q14203-2"/>
    <property type="pathway name" value="Recruitment of mitotic centrosome proteins and complexes"/>
</dbReference>
<dbReference type="Reactome" id="R-HSA-380284">
    <molecule id="Q14203-2"/>
    <property type="pathway name" value="Loss of proteins required for interphase microtubule organization from the centrosome"/>
</dbReference>
<dbReference type="Reactome" id="R-HSA-380320">
    <molecule id="Q14203-2"/>
    <property type="pathway name" value="Recruitment of NuMA to mitotic centrosomes"/>
</dbReference>
<dbReference type="Reactome" id="R-HSA-381038">
    <property type="pathway name" value="XBP1(S) activates chaperone genes"/>
</dbReference>
<dbReference type="Reactome" id="R-HSA-5620912">
    <molecule id="Q14203-2"/>
    <property type="pathway name" value="Anchoring of the basal body to the plasma membrane"/>
</dbReference>
<dbReference type="Reactome" id="R-HSA-6807878">
    <property type="pathway name" value="COPI-mediated anterograde transport"/>
</dbReference>
<dbReference type="Reactome" id="R-HSA-6811436">
    <property type="pathway name" value="COPI-independent Golgi-to-ER retrograde traffic"/>
</dbReference>
<dbReference type="Reactome" id="R-HSA-8854518">
    <molecule id="Q14203-2"/>
    <property type="pathway name" value="AURKA Activation by TPX2"/>
</dbReference>
<dbReference type="Reactome" id="R-HSA-9725370">
    <property type="pathway name" value="Signaling by ALK fusions and activated point mutants"/>
</dbReference>
<dbReference type="SignaLink" id="Q14203"/>
<dbReference type="SIGNOR" id="Q14203"/>
<dbReference type="BioGRID-ORCS" id="1639">
    <property type="hits" value="273 hits in 1160 CRISPR screens"/>
</dbReference>
<dbReference type="CD-CODE" id="8C2F96ED">
    <property type="entry name" value="Centrosome"/>
</dbReference>
<dbReference type="CD-CODE" id="FB4E32DD">
    <property type="entry name" value="Presynaptic clusters and postsynaptic densities"/>
</dbReference>
<dbReference type="ChiTaRS" id="DCTN1">
    <property type="organism name" value="human"/>
</dbReference>
<dbReference type="EvolutionaryTrace" id="Q14203"/>
<dbReference type="GeneWiki" id="DCTN1"/>
<dbReference type="GenomeRNAi" id="1639"/>
<dbReference type="Pharos" id="Q14203">
    <property type="development level" value="Tbio"/>
</dbReference>
<dbReference type="PRO" id="PR:Q14203"/>
<dbReference type="Proteomes" id="UP000005640">
    <property type="component" value="Chromosome 2"/>
</dbReference>
<dbReference type="RNAct" id="Q14203">
    <property type="molecule type" value="protein"/>
</dbReference>
<dbReference type="Bgee" id="ENSG00000204843">
    <property type="expression patterns" value="Expressed in right frontal lobe and 192 other cell types or tissues"/>
</dbReference>
<dbReference type="ExpressionAtlas" id="Q14203">
    <property type="expression patterns" value="baseline and differential"/>
</dbReference>
<dbReference type="GO" id="GO:0030424">
    <property type="term" value="C:axon"/>
    <property type="evidence" value="ECO:0000318"/>
    <property type="project" value="GO_Central"/>
</dbReference>
<dbReference type="GO" id="GO:0005938">
    <property type="term" value="C:cell cortex"/>
    <property type="evidence" value="ECO:0000314"/>
    <property type="project" value="UniProtKB"/>
</dbReference>
<dbReference type="GO" id="GO:0099738">
    <property type="term" value="C:cell cortex region"/>
    <property type="evidence" value="ECO:0000314"/>
    <property type="project" value="UniProtKB"/>
</dbReference>
<dbReference type="GO" id="GO:0031252">
    <property type="term" value="C:cell leading edge"/>
    <property type="evidence" value="ECO:0007669"/>
    <property type="project" value="Ensembl"/>
</dbReference>
<dbReference type="GO" id="GO:0120103">
    <property type="term" value="C:centriolar subdistal appendage"/>
    <property type="evidence" value="ECO:0000314"/>
    <property type="project" value="GO_Central"/>
</dbReference>
<dbReference type="GO" id="GO:0005814">
    <property type="term" value="C:centriole"/>
    <property type="evidence" value="ECO:0000314"/>
    <property type="project" value="UniProtKB"/>
</dbReference>
<dbReference type="GO" id="GO:0005813">
    <property type="term" value="C:centrosome"/>
    <property type="evidence" value="ECO:0000314"/>
    <property type="project" value="UniProtKB"/>
</dbReference>
<dbReference type="GO" id="GO:0036064">
    <property type="term" value="C:ciliary basal body"/>
    <property type="evidence" value="ECO:0000314"/>
    <property type="project" value="HPA"/>
</dbReference>
<dbReference type="GO" id="GO:0005929">
    <property type="term" value="C:cilium"/>
    <property type="evidence" value="ECO:0000314"/>
    <property type="project" value="HPA"/>
</dbReference>
<dbReference type="GO" id="GO:0005737">
    <property type="term" value="C:cytoplasm"/>
    <property type="evidence" value="ECO:0000314"/>
    <property type="project" value="ARUK-UCL"/>
</dbReference>
<dbReference type="GO" id="GO:0005829">
    <property type="term" value="C:cytosol"/>
    <property type="evidence" value="ECO:0000314"/>
    <property type="project" value="HPA"/>
</dbReference>
<dbReference type="GO" id="GO:0030286">
    <property type="term" value="C:dynein complex"/>
    <property type="evidence" value="ECO:0007669"/>
    <property type="project" value="UniProtKB-KW"/>
</dbReference>
<dbReference type="GO" id="GO:0045171">
    <property type="term" value="C:intercellular bridge"/>
    <property type="evidence" value="ECO:0000314"/>
    <property type="project" value="HPA"/>
</dbReference>
<dbReference type="GO" id="GO:0000776">
    <property type="term" value="C:kinetochore"/>
    <property type="evidence" value="ECO:0000314"/>
    <property type="project" value="UniProtKB"/>
</dbReference>
<dbReference type="GO" id="GO:0016020">
    <property type="term" value="C:membrane"/>
    <property type="evidence" value="ECO:0007005"/>
    <property type="project" value="UniProtKB"/>
</dbReference>
<dbReference type="GO" id="GO:0005874">
    <property type="term" value="C:microtubule"/>
    <property type="evidence" value="ECO:0000314"/>
    <property type="project" value="UniProtKB"/>
</dbReference>
<dbReference type="GO" id="GO:0005875">
    <property type="term" value="C:microtubule associated complex"/>
    <property type="evidence" value="ECO:0000315"/>
    <property type="project" value="ARUK-UCL"/>
</dbReference>
<dbReference type="GO" id="GO:0015630">
    <property type="term" value="C:microtubule cytoskeleton"/>
    <property type="evidence" value="ECO:0000314"/>
    <property type="project" value="HPA"/>
</dbReference>
<dbReference type="GO" id="GO:0035371">
    <property type="term" value="C:microtubule plus-end"/>
    <property type="evidence" value="ECO:0000314"/>
    <property type="project" value="UniProtKB"/>
</dbReference>
<dbReference type="GO" id="GO:0072686">
    <property type="term" value="C:mitotic spindle"/>
    <property type="evidence" value="ECO:0000314"/>
    <property type="project" value="HPA"/>
</dbReference>
<dbReference type="GO" id="GO:0043005">
    <property type="term" value="C:neuron projection"/>
    <property type="evidence" value="ECO:0000314"/>
    <property type="project" value="ARUK-UCL"/>
</dbReference>
<dbReference type="GO" id="GO:0043025">
    <property type="term" value="C:neuronal cell body"/>
    <property type="evidence" value="ECO:0000314"/>
    <property type="project" value="ARUK-UCL"/>
</dbReference>
<dbReference type="GO" id="GO:0005635">
    <property type="term" value="C:nuclear envelope"/>
    <property type="evidence" value="ECO:0000314"/>
    <property type="project" value="UniProtKB"/>
</dbReference>
<dbReference type="GO" id="GO:0005819">
    <property type="term" value="C:spindle"/>
    <property type="evidence" value="ECO:0000314"/>
    <property type="project" value="UniProtKB"/>
</dbReference>
<dbReference type="GO" id="GO:0000922">
    <property type="term" value="C:spindle pole"/>
    <property type="evidence" value="ECO:0000314"/>
    <property type="project" value="UniProtKB"/>
</dbReference>
<dbReference type="GO" id="GO:0008017">
    <property type="term" value="F:microtubule binding"/>
    <property type="evidence" value="ECO:0000314"/>
    <property type="project" value="UniProtKB"/>
</dbReference>
<dbReference type="GO" id="GO:0019901">
    <property type="term" value="F:protein kinase binding"/>
    <property type="evidence" value="ECO:0000353"/>
    <property type="project" value="ARUK-UCL"/>
</dbReference>
<dbReference type="GO" id="GO:0048156">
    <property type="term" value="F:tau protein binding"/>
    <property type="evidence" value="ECO:0000303"/>
    <property type="project" value="ARUK-UCL"/>
</dbReference>
<dbReference type="GO" id="GO:0015631">
    <property type="term" value="F:tubulin binding"/>
    <property type="evidence" value="ECO:0000314"/>
    <property type="project" value="UniProtKB"/>
</dbReference>
<dbReference type="GO" id="GO:0051301">
    <property type="term" value="P:cell division"/>
    <property type="evidence" value="ECO:0007669"/>
    <property type="project" value="UniProtKB-KW"/>
</dbReference>
<dbReference type="GO" id="GO:0010457">
    <property type="term" value="P:centriole-centriole cohesion"/>
    <property type="evidence" value="ECO:0000315"/>
    <property type="project" value="UniProtKB"/>
</dbReference>
<dbReference type="GO" id="GO:0000132">
    <property type="term" value="P:establishment of mitotic spindle orientation"/>
    <property type="evidence" value="ECO:0000315"/>
    <property type="project" value="UniProtKB"/>
</dbReference>
<dbReference type="GO" id="GO:0099558">
    <property type="term" value="P:maintenance of synapse structure"/>
    <property type="evidence" value="ECO:0000304"/>
    <property type="project" value="ARUK-UCL"/>
</dbReference>
<dbReference type="GO" id="GO:0032402">
    <property type="term" value="P:melanosome transport"/>
    <property type="evidence" value="ECO:0007669"/>
    <property type="project" value="Ensembl"/>
</dbReference>
<dbReference type="GO" id="GO:0034454">
    <property type="term" value="P:microtubule anchoring at centrosome"/>
    <property type="evidence" value="ECO:0000315"/>
    <property type="project" value="UniProtKB"/>
</dbReference>
<dbReference type="GO" id="GO:0000278">
    <property type="term" value="P:mitotic cell cycle"/>
    <property type="evidence" value="ECO:0000303"/>
    <property type="project" value="ProtInc"/>
</dbReference>
<dbReference type="GO" id="GO:0061744">
    <property type="term" value="P:motor behavior"/>
    <property type="evidence" value="ECO:0000315"/>
    <property type="project" value="ARUK-UCL"/>
</dbReference>
<dbReference type="GO" id="GO:0007399">
    <property type="term" value="P:nervous system development"/>
    <property type="evidence" value="ECO:0000303"/>
    <property type="project" value="UniProtKB"/>
</dbReference>
<dbReference type="GO" id="GO:0007528">
    <property type="term" value="P:neuromuscular junction development"/>
    <property type="evidence" value="ECO:0000315"/>
    <property type="project" value="ARUK-UCL"/>
</dbReference>
<dbReference type="GO" id="GO:0050905">
    <property type="term" value="P:neuromuscular process"/>
    <property type="evidence" value="ECO:0000315"/>
    <property type="project" value="ARUK-UCL"/>
</dbReference>
<dbReference type="GO" id="GO:0070050">
    <property type="term" value="P:neuron cellular homeostasis"/>
    <property type="evidence" value="ECO:0000315"/>
    <property type="project" value="ARUK-UCL"/>
</dbReference>
<dbReference type="GO" id="GO:1990535">
    <property type="term" value="P:neuron projection maintenance"/>
    <property type="evidence" value="ECO:0000315"/>
    <property type="project" value="ARUK-UCL"/>
</dbReference>
<dbReference type="GO" id="GO:1905515">
    <property type="term" value="P:non-motile cilium assembly"/>
    <property type="evidence" value="ECO:0000315"/>
    <property type="project" value="UniProtKB"/>
</dbReference>
<dbReference type="GO" id="GO:0051081">
    <property type="term" value="P:nuclear membrane disassembly"/>
    <property type="evidence" value="ECO:0000315"/>
    <property type="project" value="UniProtKB"/>
</dbReference>
<dbReference type="GO" id="GO:0007097">
    <property type="term" value="P:nuclear migration"/>
    <property type="evidence" value="ECO:0000318"/>
    <property type="project" value="GO_Central"/>
</dbReference>
<dbReference type="GO" id="GO:0090063">
    <property type="term" value="P:positive regulation of microtubule nucleation"/>
    <property type="evidence" value="ECO:0000314"/>
    <property type="project" value="UniProtKB"/>
</dbReference>
<dbReference type="GO" id="GO:0031116">
    <property type="term" value="P:positive regulation of microtubule polymerization"/>
    <property type="evidence" value="ECO:0000314"/>
    <property type="project" value="UniProtKB"/>
</dbReference>
<dbReference type="GO" id="GO:1904398">
    <property type="term" value="P:positive regulation of neuromuscular junction development"/>
    <property type="evidence" value="ECO:0000315"/>
    <property type="project" value="ARUK-UCL"/>
</dbReference>
<dbReference type="GO" id="GO:0060236">
    <property type="term" value="P:regulation of mitotic spindle organization"/>
    <property type="evidence" value="ECO:0000315"/>
    <property type="project" value="UniProtKB"/>
</dbReference>
<dbReference type="GO" id="GO:0042147">
    <property type="term" value="P:retrograde transport, endosome to Golgi"/>
    <property type="evidence" value="ECO:0000315"/>
    <property type="project" value="UniProtKB"/>
</dbReference>
<dbReference type="GO" id="GO:0021517">
    <property type="term" value="P:ventral spinal cord development"/>
    <property type="evidence" value="ECO:0000315"/>
    <property type="project" value="ARUK-UCL"/>
</dbReference>
<dbReference type="FunFam" id="2.30.30.190:FF:000003">
    <property type="entry name" value="dynactin subunit 1 isoform X1"/>
    <property type="match status" value="1"/>
</dbReference>
<dbReference type="Gene3D" id="1.10.287.1490">
    <property type="match status" value="1"/>
</dbReference>
<dbReference type="Gene3D" id="2.30.30.190">
    <property type="entry name" value="CAP Gly-rich-like domain"/>
    <property type="match status" value="1"/>
</dbReference>
<dbReference type="InterPro" id="IPR036859">
    <property type="entry name" value="CAP-Gly_dom_sf"/>
</dbReference>
<dbReference type="InterPro" id="IPR000938">
    <property type="entry name" value="CAP-Gly_domain"/>
</dbReference>
<dbReference type="InterPro" id="IPR022157">
    <property type="entry name" value="Dynactin"/>
</dbReference>
<dbReference type="PANTHER" id="PTHR18916">
    <property type="entry name" value="DYNACTIN 1-RELATED MICROTUBULE-BINDING"/>
    <property type="match status" value="1"/>
</dbReference>
<dbReference type="PANTHER" id="PTHR18916:SF6">
    <property type="entry name" value="DYNACTIN SUBUNIT 1"/>
    <property type="match status" value="1"/>
</dbReference>
<dbReference type="Pfam" id="PF01302">
    <property type="entry name" value="CAP_GLY"/>
    <property type="match status" value="1"/>
</dbReference>
<dbReference type="Pfam" id="PF12455">
    <property type="entry name" value="Dynactin"/>
    <property type="match status" value="1"/>
</dbReference>
<dbReference type="SMART" id="SM01052">
    <property type="entry name" value="CAP_GLY"/>
    <property type="match status" value="1"/>
</dbReference>
<dbReference type="SUPFAM" id="SSF74924">
    <property type="entry name" value="Cap-Gly domain"/>
    <property type="match status" value="1"/>
</dbReference>
<dbReference type="PROSITE" id="PS00845">
    <property type="entry name" value="CAP_GLY_1"/>
    <property type="match status" value="1"/>
</dbReference>
<dbReference type="PROSITE" id="PS50245">
    <property type="entry name" value="CAP_GLY_2"/>
    <property type="match status" value="1"/>
</dbReference>
<evidence type="ECO:0000250" key="1">
    <source>
        <dbReference type="UniProtKB" id="A0A287B8J2"/>
    </source>
</evidence>
<evidence type="ECO:0000250" key="2">
    <source>
        <dbReference type="UniProtKB" id="O08788"/>
    </source>
</evidence>
<evidence type="ECO:0000255" key="3"/>
<evidence type="ECO:0000255" key="4">
    <source>
        <dbReference type="PROSITE-ProRule" id="PRU00045"/>
    </source>
</evidence>
<evidence type="ECO:0000256" key="5">
    <source>
        <dbReference type="SAM" id="MobiDB-lite"/>
    </source>
</evidence>
<evidence type="ECO:0000269" key="6">
    <source>
    </source>
</evidence>
<evidence type="ECO:0000269" key="7">
    <source>
    </source>
</evidence>
<evidence type="ECO:0000269" key="8">
    <source>
    </source>
</evidence>
<evidence type="ECO:0000269" key="9">
    <source>
    </source>
</evidence>
<evidence type="ECO:0000269" key="10">
    <source>
    </source>
</evidence>
<evidence type="ECO:0000269" key="11">
    <source>
    </source>
</evidence>
<evidence type="ECO:0000269" key="12">
    <source>
    </source>
</evidence>
<evidence type="ECO:0000269" key="13">
    <source>
    </source>
</evidence>
<evidence type="ECO:0000269" key="14">
    <source>
    </source>
</evidence>
<evidence type="ECO:0000269" key="15">
    <source>
    </source>
</evidence>
<evidence type="ECO:0000269" key="16">
    <source>
    </source>
</evidence>
<evidence type="ECO:0000269" key="17">
    <source>
    </source>
</evidence>
<evidence type="ECO:0000269" key="18">
    <source>
    </source>
</evidence>
<evidence type="ECO:0000269" key="19">
    <source>
    </source>
</evidence>
<evidence type="ECO:0000269" key="20">
    <source>
    </source>
</evidence>
<evidence type="ECO:0000269" key="21">
    <source>
    </source>
</evidence>
<evidence type="ECO:0000269" key="22">
    <source>
    </source>
</evidence>
<evidence type="ECO:0000269" key="23">
    <source>
    </source>
</evidence>
<evidence type="ECO:0000269" key="24">
    <source>
    </source>
</evidence>
<evidence type="ECO:0000269" key="25">
    <source>
    </source>
</evidence>
<evidence type="ECO:0000269" key="26">
    <source>
    </source>
</evidence>
<evidence type="ECO:0000269" key="27">
    <source>
    </source>
</evidence>
<evidence type="ECO:0000269" key="28">
    <source>
    </source>
</evidence>
<evidence type="ECO:0000269" key="29">
    <source>
    </source>
</evidence>
<evidence type="ECO:0000269" key="30">
    <source>
    </source>
</evidence>
<evidence type="ECO:0000269" key="31">
    <source>
    </source>
</evidence>
<evidence type="ECO:0000269" key="32">
    <source>
    </source>
</evidence>
<evidence type="ECO:0000269" key="33">
    <source>
    </source>
</evidence>
<evidence type="ECO:0000269" key="34">
    <source>
    </source>
</evidence>
<evidence type="ECO:0000269" key="35">
    <source>
    </source>
</evidence>
<evidence type="ECO:0000269" key="36">
    <source>
    </source>
</evidence>
<evidence type="ECO:0000269" key="37">
    <source>
    </source>
</evidence>
<evidence type="ECO:0000269" key="38">
    <source>
    </source>
</evidence>
<evidence type="ECO:0000269" key="39">
    <source>
    </source>
</evidence>
<evidence type="ECO:0000269" key="40">
    <source>
    </source>
</evidence>
<evidence type="ECO:0000269" key="41">
    <source>
    </source>
</evidence>
<evidence type="ECO:0000269" key="42">
    <source>
    </source>
</evidence>
<evidence type="ECO:0000269" key="43">
    <source>
    </source>
</evidence>
<evidence type="ECO:0000269" key="44">
    <source>
    </source>
</evidence>
<evidence type="ECO:0000269" key="45">
    <source>
    </source>
</evidence>
<evidence type="ECO:0000303" key="46">
    <source>
    </source>
</evidence>
<evidence type="ECO:0000303" key="47">
    <source>
    </source>
</evidence>
<evidence type="ECO:0000303" key="48">
    <source>
    </source>
</evidence>
<evidence type="ECO:0000305" key="49"/>
<evidence type="ECO:0000312" key="50">
    <source>
        <dbReference type="HGNC" id="HGNC:2711"/>
    </source>
</evidence>
<evidence type="ECO:0007744" key="51">
    <source>
    </source>
</evidence>
<evidence type="ECO:0007829" key="52">
    <source>
        <dbReference type="PDB" id="1TXQ"/>
    </source>
</evidence>
<evidence type="ECO:0007829" key="53">
    <source>
        <dbReference type="PDB" id="2COY"/>
    </source>
</evidence>
<evidence type="ECO:0007829" key="54">
    <source>
        <dbReference type="PDB" id="2HQH"/>
    </source>
</evidence>
<sequence>MAQSKRHVYSRTPSGSRMSAEASARPLRVGSRVEVIGKGHRGTVAYVGATLFATGKWVGVILDEAKGKNDGTVQGRKYFTCDEGHGIFVRQSQIQVFEDGADTTSPETPDSSASKVLKREGTDTTAKTSKLRGLKPKKAPTARKTTTRRPKPTRPASTGVAGASSSLGPSGSASAGELSSSEPSTPAQTPLAAPIIPTPVLTSPGAVPPLPSPSKEEEGLRAQVRDLEEKLETLRLKRAEDKAKLKELEKHKIQLEQVQEWKSKMQEQQADLQRRLKEARKEAKEALEAKERYMEEMADTADAIEMATLDKEMAEERAESLQQEVEALKERVDELTTDLEILKAEIEEKGSDGAASSYQLKQLEEQNARLKDALVRMRDLSSSEKQEHVKLQKLMEKKNQELEVVRQQRERLQEELSQAESTIDELKEQVDAALGAEEMVEMLTDRNLNLEEKVRELRETVGDLEAMNEMNDELQENARETELELREQLDMAGARVREAQKRVEAAQETVADYQQTIKKYRQLTAHLQDVNRELTNQQEASVERQQQPPPETFDFKIKFAETKAHAKAIEMELRQMEVAQANRHMSLLTAFMPDSFLRPGGDHDCVLVLLLMPRLICKAELIRKQAQEKFELSENCSERPGLRGAAGEQLSFAAGLVYSLSLLQATLHRYEHALSQCSVDVYKKVGSLYPEMSAHERSLDFLIELLHKDQLDETVNVEPLTKAIKYYQHLYSIHLAEQPEDCTMQLADHIKFTQSALDCMSVEVGRLRAFLQGGQEATDIALLLRDLETSCSDIRQFCKKIRRRMPGTDAPGIPAALAFGPQVSDTLLDCRKHLTWVVAVLQEVAAAAAQLIAPLAENEGLLVAALEELAFKASEQIYGTPSSSPYECLRQSCNILISTMNKLATAMQEGEYDAERPPSKPPPVELRAAALRAEITDAEGLGLKLEDRETVIKELKKSLKIKGEELSEANVRLSLLEKKLDSAAKDADERIEKVQTRLEETQALLRKKEKEFEETMDALQADIDQLEAEKAELKQRLNSQSKRTIEGLRGPPPSGIATLVSGIAGEEQQRGAIPGQAPGSVPGPGLVKDSPLLLQQISAMRLHISQLQHENSILKGAQMKASLASLPPLHVAKLSHEGPGSELPAGALYRKTSQLLETLNQLSTHTHVVDITRTSPAAKSPSAQLMEQVAQLKSLSDTVEKLKDEVLKETVSQRPGATVPTDFATFPSSAFLRAKEEQQDDTVYMGKVTFSCAAGFGQRHRLVLTQEQLHQLHSRLIS</sequence>
<comment type="function">
    <text evidence="1 28 31 33 39 41">Part of the dynactin complex that activates the molecular motor dynein for ultra-processive transport along microtubules (By similarity). Plays a key role in dynein-mediated retrograde transport of vesicles and organelles along microtubules by recruiting and tethering dynein to microtubules. Binds to both dynein and microtubules providing a link between specific cargos, microtubules and dynein. Essential for targeting dynein to microtubule plus ends, recruiting dynein to membranous cargos and enhancing dynein processivity (the ability to move along a microtubule for a long distance without falling off the track). Can also act as a brake to slow the dynein motor during motility along the microtubule (PubMed:25185702). Can regulate microtubule stability by promoting microtubule formation, nucleation and polymerization and by inhibiting microtubule catastrophe in neurons. Inhibits microtubule catastrophe by binding both to microtubules and to tubulin, leading to enhanced microtubule stability along the axon (PubMed:23874158). Plays a role in metaphase spindle orientation (PubMed:22327364). Plays a role in centriole cohesion and subdistal appendage organization and function. Its recruitment to the centriole in a KIF3A-dependent manner is essential for the maintenance of centriole cohesion and the formation of subdistal appendage. Also required for microtubule anchoring at the mother centriole (PubMed:23386061). Plays a role in primary cilia formation (PubMed:25774020).</text>
</comment>
<comment type="subunit">
    <text evidence="1 2 7 10 12 13 14 16 17 21 22 23 24 25 26 27 29 30 32 33 37 39 40 42 43 44 45">Monomer and homodimer (PubMed:23874158). Subunit of dynactin, a multiprotein complex part of a tripartite complex with dynein and a adapter, such as BICDL1, BICD2 or HOOK3. The dynactin complex is built around ACTR1A/ACTB filament and consists of an actin-related filament composed of a shoulder domain, a pointed end and a barbed end. Its length is defined by its flexible shoulder domain. The soulder is composed of 2 DCTN1 subunits, 4 DCTN2 and 2 DCTN3. DCTN1/p150(glued) binds directly to microtubules and to cytoplasmic dynein. The 4 DCNT2 (via N-terminus) bind the ACTR1A filament and act as molecular rulers to determine the length. The pointed end is important for binding dynein-dynactin cargo adapters. Consists of 4 subunits: ACTR10, DCNT4, DCTN5 and DCTN6. The barbed end is composed of a CAPZA1:CAPZB heterodimers, which binds ACTR1A/ACTB filament and dynactin and stabilizes dynactin (By similarity). Interacts with the C-terminus of MAPRE1, MAPRE2 and MAPRE3. Interacts (via C-terminus) with SNX6. Interacts with CLN3, DYNAP, ECPAS and FBXL5. Interacts with MISP; this interaction regulates its distribution at the cell cortex. Interacts with CEP131. Interacts with CEP126 (PubMed:24867236). Interacts with CLIP1 (PubMed:17828275, PubMed:17828277, PubMed:20679239, PubMed:26972003). Interacts with dynein intermediate chain and dynein heavy chain (PubMed:25185702). Interacts with PLK1 (via POLO-box domain) (PubMed:20679239). Interacts with TBCB (PubMed:22777741). Binds preferentially to tyrosinated microtubules than to detyrosinated microtubules (PubMed:26968983, PubMed:26972003). Interacts with PARD6A (PubMed:20719959). Interacts with HPS6 (PubMed:25189619). Interacts with KIF3A. Interacts with BICD2 (By similarity). Interacts with DST (isoform 9) (By similarity). Interacts with DST (isoform 1) (By similarity). Identified in a complex with MREG and RILP (By similarity). Interacts with BCCIP (isoform 2/alpha) (PubMed:28394342). Interacts with DCDC1 (PubMed:22159412). Interacts with AKNA (By similarity). Interacts with DYNC1I2 (By similarity). Interacts with RUFY3 and RUFY4 (PubMed:35314674).</text>
</comment>
<comment type="interaction">
    <interactant intactId="EBI-724352">
        <id>Q14203</id>
    </interactant>
    <interactant intactId="EBI-367493">
        <id>P42025</id>
        <label>ACTR1B</label>
    </interactant>
    <organismsDiffer>false</organismsDiffer>
    <experiments>6</experiments>
</comment>
<comment type="interaction">
    <interactant intactId="EBI-724352">
        <id>Q14203</id>
    </interactant>
    <interactant intactId="EBI-1805814">
        <id>Q96RK4</id>
        <label>BBS4</label>
    </interactant>
    <organismsDiffer>false</organismsDiffer>
    <experiments>3</experiments>
</comment>
<comment type="interaction">
    <interactant intactId="EBI-724352">
        <id>Q14203</id>
    </interactant>
    <interactant intactId="EBI-9640673">
        <id>P30622-1</id>
        <label>CLIP1</label>
    </interactant>
    <organismsDiffer>false</organismsDiffer>
    <experiments>7</experiments>
</comment>
<comment type="interaction">
    <interactant intactId="EBI-724352">
        <id>Q14203</id>
    </interactant>
    <interactant intactId="EBI-1004115">
        <id>Q15691</id>
        <label>MAPRE1</label>
    </interactant>
    <organismsDiffer>false</organismsDiffer>
    <experiments>8</experiments>
</comment>
<comment type="interaction">
    <interactant intactId="EBI-724352">
        <id>Q14203</id>
    </interactant>
    <interactant intactId="EBI-366233">
        <id>P10636-8</id>
        <label>MAPT</label>
    </interactant>
    <organismsDiffer>false</organismsDiffer>
    <experiments>9</experiments>
</comment>
<comment type="interaction">
    <interactant intactId="EBI-724352">
        <id>Q14203</id>
    </interactant>
    <interactant intactId="EBI-949294">
        <id>Q9UNH7</id>
        <label>SNX6</label>
    </interactant>
    <organismsDiffer>false</organismsDiffer>
    <experiments>2</experiments>
</comment>
<comment type="interaction">
    <interactant intactId="EBI-724352">
        <id>Q14203</id>
    </interactant>
    <interactant intactId="EBI-994539">
        <id>P54256</id>
        <label>Hap1</label>
    </interactant>
    <organismsDiffer>true</organismsDiffer>
    <experiments>4</experiments>
</comment>
<comment type="interaction">
    <interactant intactId="EBI-25840379">
        <id>Q14203-5</id>
    </interactant>
    <interactant intactId="EBI-25840993">
        <id>Q6ZTN6-2</id>
        <label>ANKRD13D</label>
    </interactant>
    <organismsDiffer>false</organismsDiffer>
    <experiments>3</experiments>
</comment>
<comment type="interaction">
    <interactant intactId="EBI-25840379">
        <id>Q14203-5</id>
    </interactant>
    <interactant intactId="EBI-11529439">
        <id>P63010-2</id>
        <label>AP2B1</label>
    </interactant>
    <organismsDiffer>false</organismsDiffer>
    <experiments>3</experiments>
</comment>
<comment type="interaction">
    <interactant intactId="EBI-25840379">
        <id>Q14203-5</id>
    </interactant>
    <interactant intactId="EBI-77613">
        <id>P05067</id>
        <label>APP</label>
    </interactant>
    <organismsDiffer>false</organismsDiffer>
    <experiments>5</experiments>
</comment>
<comment type="interaction">
    <interactant intactId="EBI-25840379">
        <id>Q14203-5</id>
    </interactant>
    <interactant intactId="EBI-743231">
        <id>O95671</id>
        <label>ASMTL</label>
    </interactant>
    <organismsDiffer>false</organismsDiffer>
    <experiments>3</experiments>
</comment>
<comment type="interaction">
    <interactant intactId="EBI-25840379">
        <id>Q14203-5</id>
    </interactant>
    <interactant intactId="EBI-712767">
        <id>P18847</id>
        <label>ATF3</label>
    </interactant>
    <organismsDiffer>false</organismsDiffer>
    <experiments>3</experiments>
</comment>
<comment type="interaction">
    <interactant intactId="EBI-25840379">
        <id>Q14203-5</id>
    </interactant>
    <interactant intactId="EBI-10988864">
        <id>P46379-2</id>
        <label>BAG6</label>
    </interactant>
    <organismsDiffer>false</organismsDiffer>
    <experiments>3</experiments>
</comment>
<comment type="interaction">
    <interactant intactId="EBI-25840379">
        <id>Q14203-5</id>
    </interactant>
    <interactant intactId="EBI-1805484">
        <id>Q8NFJ9</id>
        <label>BBS1</label>
    </interactant>
    <organismsDiffer>false</organismsDiffer>
    <experiments>3</experiments>
</comment>
<comment type="interaction">
    <interactant intactId="EBI-25840379">
        <id>Q14203-5</id>
    </interactant>
    <interactant intactId="EBI-518823">
        <id>O15392</id>
        <label>BIRC5</label>
    </interactant>
    <organismsDiffer>false</organismsDiffer>
    <experiments>3</experiments>
</comment>
<comment type="interaction">
    <interactant intactId="EBI-25840379">
        <id>Q14203-5</id>
    </interactant>
    <interactant intactId="EBI-2837444">
        <id>Q8WUW1</id>
        <label>BRK1</label>
    </interactant>
    <organismsDiffer>false</organismsDiffer>
    <experiments>3</experiments>
</comment>
<comment type="interaction">
    <interactant intactId="EBI-25840379">
        <id>Q14203-5</id>
    </interactant>
    <interactant intactId="EBI-524064">
        <id>P42574</id>
        <label>CASP3</label>
    </interactant>
    <organismsDiffer>false</organismsDiffer>
    <experiments>3</experiments>
</comment>
<comment type="interaction">
    <interactant intactId="EBI-25840379">
        <id>Q14203-5</id>
    </interactant>
    <interactant intactId="EBI-350590">
        <id>Q9UNS2</id>
        <label>COPS3</label>
    </interactant>
    <organismsDiffer>false</organismsDiffer>
    <experiments>3</experiments>
</comment>
<comment type="interaction">
    <interactant intactId="EBI-25840379">
        <id>Q14203-5</id>
    </interactant>
    <interactant intactId="EBI-12091947">
        <id>O75935-2</id>
        <label>DCTN3</label>
    </interactant>
    <organismsDiffer>false</organismsDiffer>
    <experiments>3</experiments>
</comment>
<comment type="interaction">
    <interactant intactId="EBI-25840379">
        <id>Q14203-5</id>
    </interactant>
    <interactant intactId="EBI-3908248">
        <id>O60479</id>
        <label>DLX3</label>
    </interactant>
    <organismsDiffer>false</organismsDiffer>
    <experiments>3</experiments>
</comment>
<comment type="interaction">
    <interactant intactId="EBI-25840379">
        <id>Q14203-5</id>
    </interactant>
    <interactant intactId="EBI-25840445">
        <id>O14576-2</id>
        <label>DYNC1I1</label>
    </interactant>
    <organismsDiffer>false</organismsDiffer>
    <experiments>3</experiments>
</comment>
<comment type="interaction">
    <interactant intactId="EBI-25840379">
        <id>Q14203-5</id>
    </interactant>
    <interactant intactId="EBI-9246952">
        <id>Q8TC29</id>
        <label>ENKUR</label>
    </interactant>
    <organismsDiffer>false</organismsDiffer>
    <experiments>3</experiments>
</comment>
<comment type="interaction">
    <interactant intactId="EBI-25840379">
        <id>Q14203-5</id>
    </interactant>
    <interactant intactId="EBI-10213520">
        <id>Q6NXG1</id>
        <label>ESRP1</label>
    </interactant>
    <organismsDiffer>false</organismsDiffer>
    <experiments>3</experiments>
</comment>
<comment type="interaction">
    <interactant intactId="EBI-25840379">
        <id>Q14203-5</id>
    </interactant>
    <interactant intactId="EBI-396453">
        <id>Q9UHY8</id>
        <label>FEZ2</label>
    </interactant>
    <organismsDiffer>false</organismsDiffer>
    <experiments>3</experiments>
</comment>
<comment type="interaction">
    <interactant intactId="EBI-25840379">
        <id>Q14203-5</id>
    </interactant>
    <interactant intactId="EBI-301697">
        <id>Q9UBN7</id>
        <label>HDAC6</label>
    </interactant>
    <organismsDiffer>false</organismsDiffer>
    <experiments>6</experiments>
</comment>
<comment type="interaction">
    <interactant intactId="EBI-25840379">
        <id>Q14203-5</id>
    </interactant>
    <interactant intactId="EBI-9091197">
        <id>Q8IY31-3</id>
        <label>IFT20</label>
    </interactant>
    <organismsDiffer>false</organismsDiffer>
    <experiments>3</experiments>
</comment>
<comment type="interaction">
    <interactant intactId="EBI-25840379">
        <id>Q14203-5</id>
    </interactant>
    <interactant intactId="EBI-21911304">
        <id>Q6DN90-2</id>
        <label>IQSEC1</label>
    </interactant>
    <organismsDiffer>false</organismsDiffer>
    <experiments>3</experiments>
</comment>
<comment type="interaction">
    <interactant intactId="EBI-25840379">
        <id>Q14203-5</id>
    </interactant>
    <interactant intactId="EBI-744150">
        <id>Q96EK5</id>
        <label>KIFBP</label>
    </interactant>
    <organismsDiffer>false</organismsDiffer>
    <experiments>3</experiments>
</comment>
<comment type="interaction">
    <interactant intactId="EBI-25840379">
        <id>Q14203-5</id>
    </interactant>
    <interactant intactId="EBI-714379">
        <id>Q9Y2M5</id>
        <label>KLHL20</label>
    </interactant>
    <organismsDiffer>false</organismsDiffer>
    <experiments>3</experiments>
</comment>
<comment type="interaction">
    <interactant intactId="EBI-25840379">
        <id>Q14203-5</id>
    </interactant>
    <interactant intactId="EBI-11985629">
        <id>Q96JM7-2</id>
        <label>L3MBTL3</label>
    </interactant>
    <organismsDiffer>false</organismsDiffer>
    <experiments>3</experiments>
</comment>
<comment type="interaction">
    <interactant intactId="EBI-25840379">
        <id>Q14203-5</id>
    </interactant>
    <interactant intactId="EBI-1108377">
        <id>Q9BYZ2</id>
        <label>LDHAL6B</label>
    </interactant>
    <organismsDiffer>false</organismsDiffer>
    <experiments>3</experiments>
</comment>
<comment type="interaction">
    <interactant intactId="EBI-25840379">
        <id>Q14203-5</id>
    </interactant>
    <interactant intactId="EBI-347779">
        <id>O95777</id>
        <label>LSM8</label>
    </interactant>
    <organismsDiffer>false</organismsDiffer>
    <experiments>3</experiments>
</comment>
<comment type="interaction">
    <interactant intactId="EBI-25840379">
        <id>Q14203-5</id>
    </interactant>
    <interactant intactId="EBI-1045155">
        <id>P43360</id>
        <label>MAGEA6</label>
    </interactant>
    <organismsDiffer>false</organismsDiffer>
    <experiments>3</experiments>
</comment>
<comment type="interaction">
    <interactant intactId="EBI-25840379">
        <id>Q14203-5</id>
    </interactant>
    <interactant intactId="EBI-7796455">
        <id>P10636-6</id>
        <label>MAPT</label>
    </interactant>
    <organismsDiffer>false</organismsDiffer>
    <experiments>3</experiments>
</comment>
<comment type="interaction">
    <interactant intactId="EBI-25840379">
        <id>Q14203-5</id>
    </interactant>
    <interactant intactId="EBI-21250407">
        <id>A4FUJ8</id>
        <label>MKL1</label>
    </interactant>
    <organismsDiffer>false</organismsDiffer>
    <experiments>3</experiments>
</comment>
<comment type="interaction">
    <interactant intactId="EBI-25840379">
        <id>Q14203-5</id>
    </interactant>
    <interactant intactId="EBI-2512452">
        <id>Q8N594</id>
        <label>MPND</label>
    </interactant>
    <organismsDiffer>false</organismsDiffer>
    <experiments>3</experiments>
</comment>
<comment type="interaction">
    <interactant intactId="EBI-25840379">
        <id>Q14203-5</id>
    </interactant>
    <interactant intactId="EBI-18577082">
        <id>O15381-5</id>
        <label>NVL</label>
    </interactant>
    <organismsDiffer>false</organismsDiffer>
    <experiments>3</experiments>
</comment>
<comment type="interaction">
    <interactant intactId="EBI-25840379">
        <id>Q14203-5</id>
    </interactant>
    <interactant intactId="EBI-1058491">
        <id>Q96FW1</id>
        <label>OTUB1</label>
    </interactant>
    <organismsDiffer>false</organismsDiffer>
    <experiments>3</experiments>
</comment>
<comment type="interaction">
    <interactant intactId="EBI-25840379">
        <id>Q14203-5</id>
    </interactant>
    <interactant intactId="EBI-25830200">
        <id>Q6GQQ9-2</id>
        <label>OTUD7B</label>
    </interactant>
    <organismsDiffer>false</organismsDiffer>
    <experiments>3</experiments>
</comment>
<comment type="interaction">
    <interactant intactId="EBI-25840379">
        <id>Q14203-5</id>
    </interactant>
    <interactant intactId="EBI-22012354">
        <id>Q9BR81</id>
        <label>PCDHGC3</label>
    </interactant>
    <organismsDiffer>false</organismsDiffer>
    <experiments>3</experiments>
</comment>
<comment type="interaction">
    <interactant intactId="EBI-25840379">
        <id>Q14203-5</id>
    </interactant>
    <interactant intactId="EBI-6309018">
        <id>Q9NV79</id>
        <label>PCMTD2</label>
    </interactant>
    <organismsDiffer>false</organismsDiffer>
    <experiments>3</experiments>
</comment>
<comment type="interaction">
    <interactant intactId="EBI-25840379">
        <id>Q14203-5</id>
    </interactant>
    <interactant intactId="EBI-359720">
        <id>P17980</id>
        <label>PSMC3</label>
    </interactant>
    <organismsDiffer>false</organismsDiffer>
    <experiments>3</experiments>
</comment>
<comment type="interaction">
    <interactant intactId="EBI-25840379">
        <id>Q14203-5</id>
    </interactant>
    <interactant intactId="EBI-14093916">
        <id>Q9UJ41-4</id>
        <label>RABGEF1</label>
    </interactant>
    <organismsDiffer>false</organismsDiffer>
    <experiments>3</experiments>
</comment>
<comment type="interaction">
    <interactant intactId="EBI-25840379">
        <id>Q14203-5</id>
    </interactant>
    <interactant intactId="EBI-25829984">
        <id>Q9ULX5</id>
        <label>RNF112</label>
    </interactant>
    <organismsDiffer>false</organismsDiffer>
    <experiments>3</experiments>
</comment>
<comment type="interaction">
    <interactant intactId="EBI-25840379">
        <id>Q14203-5</id>
    </interactant>
    <interactant intactId="EBI-914207">
        <id>Q8IYW5</id>
        <label>RNF168</label>
    </interactant>
    <organismsDiffer>false</organismsDiffer>
    <experiments>3</experiments>
</comment>
<comment type="interaction">
    <interactant intactId="EBI-25840379">
        <id>Q14203-5</id>
    </interactant>
    <interactant intactId="EBI-743938">
        <id>Q96D59</id>
        <label>RNF183</label>
    </interactant>
    <organismsDiffer>false</organismsDiffer>
    <experiments>3</experiments>
</comment>
<comment type="interaction">
    <interactant intactId="EBI-25840379">
        <id>Q14203-5</id>
    </interactant>
    <interactant intactId="EBI-16431517">
        <id>Q92834-6</id>
        <label>RPGR</label>
    </interactant>
    <organismsDiffer>false</organismsDiffer>
    <experiments>3</experiments>
</comment>
<comment type="interaction">
    <interactant intactId="EBI-25840379">
        <id>Q14203-5</id>
    </interactant>
    <interactant intactId="EBI-752324">
        <id>Q8N488</id>
        <label>RYBP</label>
    </interactant>
    <organismsDiffer>false</organismsDiffer>
    <experiments>3</experiments>
</comment>
<comment type="interaction">
    <interactant intactId="EBI-25840379">
        <id>Q14203-5</id>
    </interactant>
    <interactant intactId="EBI-81088">
        <id>Q15436</id>
        <label>SEC23A</label>
    </interactant>
    <organismsDiffer>false</organismsDiffer>
    <experiments>3</experiments>
</comment>
<comment type="interaction">
    <interactant intactId="EBI-25840379">
        <id>Q14203-5</id>
    </interactant>
    <interactant intactId="EBI-358545">
        <id>Q9GZS3</id>
        <label>SKIC8</label>
    </interactant>
    <organismsDiffer>false</organismsDiffer>
    <experiments>3</experiments>
</comment>
<comment type="interaction">
    <interactant intactId="EBI-25840379">
        <id>Q14203-5</id>
    </interactant>
    <interactant intactId="EBI-9845742">
        <id>Q9HCE7-2</id>
        <label>SMURF1</label>
    </interactant>
    <organismsDiffer>false</organismsDiffer>
    <experiments>3</experiments>
</comment>
<comment type="interaction">
    <interactant intactId="EBI-25840379">
        <id>Q14203-5</id>
    </interactant>
    <interactant intactId="EBI-11959123">
        <id>Q99932-2</id>
        <label>SPAG8</label>
    </interactant>
    <organismsDiffer>false</organismsDiffer>
    <experiments>3</experiments>
</comment>
<comment type="interaction">
    <interactant intactId="EBI-25840379">
        <id>Q14203-5</id>
    </interactant>
    <interactant intactId="EBI-373258">
        <id>O75886</id>
        <label>STAM2</label>
    </interactant>
    <organismsDiffer>false</organismsDiffer>
    <experiments>3</experiments>
</comment>
<comment type="interaction">
    <interactant intactId="EBI-25840379">
        <id>Q14203-5</id>
    </interactant>
    <interactant intactId="EBI-25840535">
        <id>Q15554-4</id>
        <label>TERF2</label>
    </interactant>
    <organismsDiffer>false</organismsDiffer>
    <experiments>3</experiments>
</comment>
<comment type="interaction">
    <interactant intactId="EBI-25840379">
        <id>Q14203-5</id>
    </interactant>
    <interactant intactId="EBI-25831574">
        <id>Q71RG4-4</id>
        <label>TMUB2</label>
    </interactant>
    <organismsDiffer>false</organismsDiffer>
    <experiments>3</experiments>
</comment>
<comment type="interaction">
    <interactant intactId="EBI-25840379">
        <id>Q14203-5</id>
    </interactant>
    <interactant intactId="EBI-74615">
        <id>Q9H0E2</id>
        <label>TOLLIP</label>
    </interactant>
    <organismsDiffer>false</organismsDiffer>
    <experiments>3</experiments>
</comment>
<comment type="interaction">
    <interactant intactId="EBI-25840379">
        <id>Q14203-5</id>
    </interactant>
    <interactant intactId="EBI-81290">
        <id>P19474</id>
        <label>TRIM21</label>
    </interactant>
    <organismsDiffer>false</organismsDiffer>
    <experiments>3</experiments>
</comment>
<comment type="interaction">
    <interactant intactId="EBI-25840379">
        <id>Q14203-5</id>
    </interactant>
    <interactant intactId="EBI-1797313">
        <id>Q8WVJ9</id>
        <label>TWIST2</label>
    </interactant>
    <organismsDiffer>false</organismsDiffer>
    <experiments>3</experiments>
</comment>
<comment type="interaction">
    <interactant intactId="EBI-25840379">
        <id>Q14203-5</id>
    </interactant>
    <interactant intactId="EBI-357304">
        <id>P62987</id>
        <label>UBA52</label>
    </interactant>
    <organismsDiffer>false</organismsDiffer>
    <experiments>3</experiments>
</comment>
<comment type="interaction">
    <interactant intactId="EBI-25840379">
        <id>Q14203-5</id>
    </interactant>
    <interactant intactId="EBI-749370">
        <id>Q9BSL1</id>
        <label>UBAC1</label>
    </interactant>
    <organismsDiffer>false</organismsDiffer>
    <experiments>3</experiments>
</comment>
<comment type="interaction">
    <interactant intactId="EBI-25840379">
        <id>Q14203-5</id>
    </interactant>
    <interactant intactId="EBI-25840976">
        <id>Q8NBM4-4</id>
        <label>UBAC2</label>
    </interactant>
    <organismsDiffer>false</organismsDiffer>
    <experiments>3</experiments>
</comment>
<comment type="interaction">
    <interactant intactId="EBI-25840379">
        <id>Q14203-5</id>
    </interactant>
    <interactant intactId="EBI-7353612">
        <id>P57075-2</id>
        <label>UBASH3A</label>
    </interactant>
    <organismsDiffer>false</organismsDiffer>
    <experiments>3</experiments>
</comment>
<comment type="interaction">
    <interactant intactId="EBI-25840379">
        <id>Q14203-5</id>
    </interactant>
    <interactant intactId="EBI-11530712">
        <id>Q04323-2</id>
        <label>UBXN1</label>
    </interactant>
    <organismsDiffer>false</organismsDiffer>
    <experiments>3</experiments>
</comment>
<comment type="interaction">
    <interactant intactId="EBI-25840379">
        <id>Q14203-5</id>
    </interactant>
    <interactant intactId="EBI-17761788">
        <id>Q96RL1-2</id>
        <label>UIMC1</label>
    </interactant>
    <organismsDiffer>false</organismsDiffer>
    <experiments>3</experiments>
</comment>
<comment type="interaction">
    <interactant intactId="EBI-25840379">
        <id>Q14203-5</id>
    </interactant>
    <interactant intactId="EBI-743923">
        <id>O00308</id>
        <label>WWP2</label>
    </interactant>
    <organismsDiffer>false</organismsDiffer>
    <experiments>3</experiments>
</comment>
<comment type="subcellular location">
    <subcellularLocation>
        <location evidence="17">Cytoplasm</location>
    </subcellularLocation>
    <subcellularLocation>
        <location evidence="17 29 41 43">Cytoplasm</location>
        <location evidence="17 29 41 43">Cytoskeleton</location>
    </subcellularLocation>
    <subcellularLocation>
        <location evidence="8 24 34 41">Cytoplasm</location>
        <location evidence="8 24 34 41">Cytoskeleton</location>
        <location evidence="8 24 34 41">Microtubule organizing center</location>
        <location evidence="8 24 34 41">Centrosome</location>
    </subcellularLocation>
    <subcellularLocation>
        <location evidence="31 41">Cytoplasm</location>
        <location evidence="31 41">Cytoskeleton</location>
        <location evidence="31 41">Microtubule organizing center</location>
        <location evidence="31 41">Centrosome</location>
        <location evidence="31 41">Centriole</location>
    </subcellularLocation>
    <subcellularLocation>
        <location evidence="41">Cytoplasm</location>
        <location evidence="41">Cytoskeleton</location>
        <location evidence="41">Spindle</location>
    </subcellularLocation>
    <subcellularLocation>
        <location evidence="22">Nucleus envelope</location>
    </subcellularLocation>
    <subcellularLocation>
        <location evidence="28">Cytoplasm</location>
        <location evidence="28">Cell cortex</location>
    </subcellularLocation>
    <text evidence="17 22 24 29 31 34 41 43">Localizes to microtubule plus ends (PubMed:17828277, PubMed:22777741, PubMed:25774020). Localizes preferentially to the ends of tyrosinated microtubules (PubMed:26972003). Localization at centrosome is regulated by SLK-dependent phosphorylation (PubMed:23985322). Localizes to centrosome in a PARKDA-dependent manner (PubMed:20719959). Localizes to the subdistal appendage region of the centriole in a KIF3A-dependent manner (PubMed:23386061). PLK1-mediated phosphorylation at Ser-179 is essential for its localization in the nuclear envelope (PubMed:20679239).</text>
</comment>
<comment type="alternative products">
    <event type="alternative splicing"/>
    <isoform>
        <id>Q14203-1</id>
        <name>p150</name>
        <sequence type="displayed"/>
    </isoform>
    <isoform>
        <id>Q14203-2</id>
        <name>p135</name>
        <sequence type="described" ref="VSP_000760"/>
    </isoform>
    <isoform>
        <id>Q14203-3</id>
        <name>3</name>
        <sequence type="described" ref="VSP_045392 VSP_045393 VSP_045394"/>
    </isoform>
    <isoform>
        <id>Q14203-4</id>
        <name>4</name>
        <sequence type="described" ref="VSP_045393 VSP_045394"/>
    </isoform>
    <isoform>
        <id>Q14203-5</id>
        <name>5</name>
        <sequence type="described" ref="VSP_000760 VSP_045394"/>
    </isoform>
    <isoform>
        <id>Q14203-6</id>
        <name>6</name>
        <sequence type="described" ref="VSP_047174"/>
    </isoform>
</comment>
<comment type="tissue specificity">
    <text>Brain.</text>
</comment>
<comment type="domain">
    <text evidence="39 42 43">The CAP-Gly domain is essential for interactions with microtubules and its binding partners and for its motion along the microtubules. Essential for its preferential binding to tyrosinated microtubules and for promoting the sustained interaction of the dynein motor with microtubules.</text>
</comment>
<comment type="PTM">
    <text evidence="14">Ubiquitinated by a SCF complex containing FBXL5, leading to its degradation by the proteasome.</text>
</comment>
<comment type="PTM">
    <text evidence="22 34">Phosphorylation by SLK at Thr-145, Thr-146 and Thr-147 targets DCTN1 to the centrosome. It is uncertain if SLK phosphorylates all three threonines or one or two of them. PLK1-mediated phosphorylation at Ser-179 is essential for its localization in the nuclear envelope, promotes its dissociation from microtubules during early mitosis and positively regulates nuclear envelope breakdown during prophase.</text>
</comment>
<comment type="disease" evidence="6 12 18 19 29">
    <disease id="DI-00404">
        <name>Neuronopathy, distal hereditary motor, autosomal dominant 14</name>
        <acronym>HMND14</acronym>
        <description>A form of distal hereditary motor neuronopathy, a heterogeneous group of neuromuscular disorders caused by selective degeneration of motor neurons in the anterior horn of the spinal cord, without sensory deficit in the posterior horn. The overall clinical picture consists of a classical distal muscular atrophy syndrome in the legs without clinical sensory loss. The disease starts with weakness and wasting of distal muscles of the anterior tibial and peroneal compartments of the legs. Later on, weakness and atrophy may expand to the proximal muscles of the lower limbs and/or to the distal upper limbs.</description>
        <dbReference type="MIM" id="607641"/>
    </disease>
    <text>The disease is caused by variants affecting the gene represented in this entry.</text>
</comment>
<comment type="disease" evidence="9 11">
    <disease id="DI-00107">
        <name>Amyotrophic lateral sclerosis</name>
        <acronym>ALS</acronym>
        <description>A neurodegenerative disorder affecting upper motor neurons in the brain and lower motor neurons in the brain stem and spinal cord, resulting in fatal paralysis. Sensory abnormalities are absent. The pathologic hallmarks of the disease include pallor of the corticospinal tract due to loss of motor neurons, presence of ubiquitin-positive inclusions within surviving motor neurons, and deposition of pathologic aggregates. The etiology of amyotrophic lateral sclerosis is likely to be multifactorial, involving both genetic and environmental factors. The disease is inherited in 5-10% of the cases.</description>
        <dbReference type="MIM" id="105400"/>
    </disease>
    <text>Disease susceptibility is associated with variants affecting the gene represented in this entry.</text>
</comment>
<comment type="disease" evidence="18 33 36 38 39 43">
    <disease id="DI-02797">
        <name>Perry syndrome</name>
        <acronym>PERRYS</acronym>
        <description>A neuropsychiatric disorder characterized by mental depression not responsive to antidepressant drugs or electroconvulsive therapy, sleep disturbances, exhaustion and marked weight loss. Parkinsonism develops later and respiratory failure occurred terminally.</description>
        <dbReference type="MIM" id="168605"/>
    </disease>
    <text>The disease is caused by variants affecting the gene represented in this entry.</text>
</comment>
<comment type="similarity">
    <text evidence="49">Belongs to the dynactin 150 kDa subunit family.</text>
</comment>